<name>CLUS_HUMAN</name>
<sequence length="449" mass="52495">MMKTLLLFVGLLLTWESGQVLGDQTVSDNELQEMSNQGSKYVNKEIQNAVNGVKQIKTLIEKTNEERKTLLSNLEEAKKKKEDALNETRESETKLKELPGVCNETMMALWEECKPCLKQTCMKFYARVCRSGSGLVGRQLEEFLNQSSPFYFWMNGDRIDSLLENDRQQTHMLDVMQDHFSRASSIIDELFQDRFFTREPQDTYHYLPFSLPHRRPHFFFPKSRIVRSLMPFSPYEPLNFHAMFQPFLEMIHEAQQAMDIHFHSPAFQHPPTEFIREGDDDRTVCREIRHNSTGCLRMKDQCDKCREILSVDCSTNNPSQAKLRRELDESLQVAERLTRKYNELLKSYQWKMLNTSSLLEQLNEQFNWVSRLANLTQGEDQYYLRVTTVASHTSDSDVPSGVTEVVVKLFDSDPITVTVPVEVSRKNPKFMETVAEKALQEYRKKHREE</sequence>
<proteinExistence type="evidence at protein level"/>
<reference key="1">
    <citation type="journal article" date="1989" name="Proc. Natl. Acad. Sci. U.S.A.">
        <title>Molecular structure and functional characterization of a human complement cytolysis inhibitor found in blood and seminal plasma: identity to sulfated glycoprotein 2, a constituent of rat testis fluid.</title>
        <authorList>
            <person name="Jenne D.E."/>
            <person name="Tschopp J."/>
        </authorList>
    </citation>
    <scope>NUCLEOTIDE SEQUENCE [MRNA] (ISOFORM 1)</scope>
    <scope>PROTEIN SEQUENCE OF N-TERMINUS</scope>
    <scope>SUBUNIT</scope>
    <scope>DISULFIDE BONDS</scope>
    <scope>SUBCELLULAR LOCATION</scope>
    <scope>TISSUE SPECIFICITY</scope>
    <scope>FUNCTION</scope>
    <source>
        <tissue>Liver</tissue>
    </source>
</reference>
<reference key="2">
    <citation type="journal article" date="1994" name="Eur. J. Biochem.">
        <title>Molecular characterization of human TRPM-2/clusterin, a gene associated with sperm maturation, apoptosis and neurodegeneration.</title>
        <authorList>
            <person name="Wong P."/>
            <person name="Taillefer D."/>
            <person name="Lakins J."/>
            <person name="Pineault J."/>
            <person name="Chader G."/>
            <person name="Tenniswood M."/>
        </authorList>
    </citation>
    <scope>NUCLEOTIDE SEQUENCE [GENOMIC DNA]</scope>
    <scope>PARTIAL NUCLEOTIDE SEQUENCE [MRNA] (ISOFORM 2)</scope>
    <scope>TISSUE SPECIFICITY</scope>
</reference>
<reference key="3">
    <citation type="journal article" date="2013" name="PLoS ONE">
        <title>Non-secreted clusterin isoforms are translated in rare amounts from distinct human mRNA variants and do not affect Bax-mediated apoptosis or the NF-kappaB signaling pathway.</title>
        <authorList>
            <person name="Prochnow H."/>
            <person name="Gollan R."/>
            <person name="Rohne P."/>
            <person name="Hassemer M."/>
            <person name="Koch-Brandt C."/>
            <person name="Baiersdoerfer M."/>
        </authorList>
    </citation>
    <scope>NUCLEOTIDE SEQUENCE [MRNA] (ISOFORMS 1; 4 AND 6)</scope>
    <scope>SUBCELLULAR LOCATION</scope>
    <scope>GLYCOSYLATION (ISOFORM 1)</scope>
</reference>
<reference key="4">
    <citation type="journal article" date="2004" name="Nat. Genet.">
        <title>Complete sequencing and characterization of 21,243 full-length human cDNAs.</title>
        <authorList>
            <person name="Ota T."/>
            <person name="Suzuki Y."/>
            <person name="Nishikawa T."/>
            <person name="Otsuki T."/>
            <person name="Sugiyama T."/>
            <person name="Irie R."/>
            <person name="Wakamatsu A."/>
            <person name="Hayashi K."/>
            <person name="Sato H."/>
            <person name="Nagai K."/>
            <person name="Kimura K."/>
            <person name="Makita H."/>
            <person name="Sekine M."/>
            <person name="Obayashi M."/>
            <person name="Nishi T."/>
            <person name="Shibahara T."/>
            <person name="Tanaka T."/>
            <person name="Ishii S."/>
            <person name="Yamamoto J."/>
            <person name="Saito K."/>
            <person name="Kawai Y."/>
            <person name="Isono Y."/>
            <person name="Nakamura Y."/>
            <person name="Nagahari K."/>
            <person name="Murakami K."/>
            <person name="Yasuda T."/>
            <person name="Iwayanagi T."/>
            <person name="Wagatsuma M."/>
            <person name="Shiratori A."/>
            <person name="Sudo H."/>
            <person name="Hosoiri T."/>
            <person name="Kaku Y."/>
            <person name="Kodaira H."/>
            <person name="Kondo H."/>
            <person name="Sugawara M."/>
            <person name="Takahashi M."/>
            <person name="Kanda K."/>
            <person name="Yokoi T."/>
            <person name="Furuya T."/>
            <person name="Kikkawa E."/>
            <person name="Omura Y."/>
            <person name="Abe K."/>
            <person name="Kamihara K."/>
            <person name="Katsuta N."/>
            <person name="Sato K."/>
            <person name="Tanikawa M."/>
            <person name="Yamazaki M."/>
            <person name="Ninomiya K."/>
            <person name="Ishibashi T."/>
            <person name="Yamashita H."/>
            <person name="Murakawa K."/>
            <person name="Fujimori K."/>
            <person name="Tanai H."/>
            <person name="Kimata M."/>
            <person name="Watanabe M."/>
            <person name="Hiraoka S."/>
            <person name="Chiba Y."/>
            <person name="Ishida S."/>
            <person name="Ono Y."/>
            <person name="Takiguchi S."/>
            <person name="Watanabe S."/>
            <person name="Yosida M."/>
            <person name="Hotuta T."/>
            <person name="Kusano J."/>
            <person name="Kanehori K."/>
            <person name="Takahashi-Fujii A."/>
            <person name="Hara H."/>
            <person name="Tanase T.-O."/>
            <person name="Nomura Y."/>
            <person name="Togiya S."/>
            <person name="Komai F."/>
            <person name="Hara R."/>
            <person name="Takeuchi K."/>
            <person name="Arita M."/>
            <person name="Imose N."/>
            <person name="Musashino K."/>
            <person name="Yuuki H."/>
            <person name="Oshima A."/>
            <person name="Sasaki N."/>
            <person name="Aotsuka S."/>
            <person name="Yoshikawa Y."/>
            <person name="Matsunawa H."/>
            <person name="Ichihara T."/>
            <person name="Shiohata N."/>
            <person name="Sano S."/>
            <person name="Moriya S."/>
            <person name="Momiyama H."/>
            <person name="Satoh N."/>
            <person name="Takami S."/>
            <person name="Terashima Y."/>
            <person name="Suzuki O."/>
            <person name="Nakagawa S."/>
            <person name="Senoh A."/>
            <person name="Mizoguchi H."/>
            <person name="Goto Y."/>
            <person name="Shimizu F."/>
            <person name="Wakebe H."/>
            <person name="Hishigaki H."/>
            <person name="Watanabe T."/>
            <person name="Sugiyama A."/>
            <person name="Takemoto M."/>
            <person name="Kawakami B."/>
            <person name="Yamazaki M."/>
            <person name="Watanabe K."/>
            <person name="Kumagai A."/>
            <person name="Itakura S."/>
            <person name="Fukuzumi Y."/>
            <person name="Fujimori Y."/>
            <person name="Komiyama M."/>
            <person name="Tashiro H."/>
            <person name="Tanigami A."/>
            <person name="Fujiwara T."/>
            <person name="Ono T."/>
            <person name="Yamada K."/>
            <person name="Fujii Y."/>
            <person name="Ozaki K."/>
            <person name="Hirao M."/>
            <person name="Ohmori Y."/>
            <person name="Kawabata A."/>
            <person name="Hikiji T."/>
            <person name="Kobatake N."/>
            <person name="Inagaki H."/>
            <person name="Ikema Y."/>
            <person name="Okamoto S."/>
            <person name="Okitani R."/>
            <person name="Kawakami T."/>
            <person name="Noguchi S."/>
            <person name="Itoh T."/>
            <person name="Shigeta K."/>
            <person name="Senba T."/>
            <person name="Matsumura K."/>
            <person name="Nakajima Y."/>
            <person name="Mizuno T."/>
            <person name="Morinaga M."/>
            <person name="Sasaki M."/>
            <person name="Togashi T."/>
            <person name="Oyama M."/>
            <person name="Hata H."/>
            <person name="Watanabe M."/>
            <person name="Komatsu T."/>
            <person name="Mizushima-Sugano J."/>
            <person name="Satoh T."/>
            <person name="Shirai Y."/>
            <person name="Takahashi Y."/>
            <person name="Nakagawa K."/>
            <person name="Okumura K."/>
            <person name="Nagase T."/>
            <person name="Nomura N."/>
            <person name="Kikuchi H."/>
            <person name="Masuho Y."/>
            <person name="Yamashita R."/>
            <person name="Nakai K."/>
            <person name="Yada T."/>
            <person name="Nakamura Y."/>
            <person name="Ohara O."/>
            <person name="Isogai T."/>
            <person name="Sugano S."/>
        </authorList>
    </citation>
    <scope>NUCLEOTIDE SEQUENCE [LARGE SCALE MRNA] (ISOFORM 3)</scope>
    <scope>PARTIAL NUCLEOTIDE SEQUENCE [LARGE SCALE MRNA] (ISOFORM 2)</scope>
    <source>
        <tissue>Stomach</tissue>
        <tissue>Testis</tissue>
    </source>
</reference>
<reference key="5">
    <citation type="submission" date="2004-07" db="EMBL/GenBank/DDBJ databases">
        <title>Full-length cDNA libraries and normalization.</title>
        <authorList>
            <person name="Li W.B."/>
            <person name="Gruber C."/>
            <person name="Jessee J."/>
            <person name="Polayes D."/>
        </authorList>
    </citation>
    <scope>NUCLEOTIDE SEQUENCE [LARGE SCALE MRNA] (ISOFORM 2)</scope>
    <source>
        <tissue>Brain</tissue>
    </source>
</reference>
<reference key="6">
    <citation type="journal article" date="2007" name="BMC Genomics">
        <title>The full-ORF clone resource of the German cDNA consortium.</title>
        <authorList>
            <person name="Bechtel S."/>
            <person name="Rosenfelder H."/>
            <person name="Duda A."/>
            <person name="Schmidt C.P."/>
            <person name="Ernst U."/>
            <person name="Wellenreuther R."/>
            <person name="Mehrle A."/>
            <person name="Schuster C."/>
            <person name="Bahr A."/>
            <person name="Bloecker H."/>
            <person name="Heubner D."/>
            <person name="Hoerlein A."/>
            <person name="Michel G."/>
            <person name="Wedler H."/>
            <person name="Koehrer K."/>
            <person name="Ottenwaelder B."/>
            <person name="Poustka A."/>
            <person name="Wiemann S."/>
            <person name="Schupp I."/>
        </authorList>
    </citation>
    <scope>NUCLEOTIDE SEQUENCE [LARGE SCALE MRNA] (ISOFORM 1)</scope>
    <source>
        <tissue>Small intestine</tissue>
    </source>
</reference>
<reference key="7">
    <citation type="submission" date="2003-07" db="EMBL/GenBank/DDBJ databases">
        <authorList>
            <consortium name="NIEHS SNPs program"/>
        </authorList>
    </citation>
    <scope>NUCLEOTIDE SEQUENCE [GENOMIC DNA]</scope>
    <scope>VARIANTS HIS-317; ASN-328 AND LEU-396</scope>
</reference>
<reference key="8">
    <citation type="journal article" date="2006" name="Nature">
        <title>DNA sequence and analysis of human chromosome 8.</title>
        <authorList>
            <person name="Nusbaum C."/>
            <person name="Mikkelsen T.S."/>
            <person name="Zody M.C."/>
            <person name="Asakawa S."/>
            <person name="Taudien S."/>
            <person name="Garber M."/>
            <person name="Kodira C.D."/>
            <person name="Schueler M.G."/>
            <person name="Shimizu A."/>
            <person name="Whittaker C.A."/>
            <person name="Chang J.L."/>
            <person name="Cuomo C.A."/>
            <person name="Dewar K."/>
            <person name="FitzGerald M.G."/>
            <person name="Yang X."/>
            <person name="Allen N.R."/>
            <person name="Anderson S."/>
            <person name="Asakawa T."/>
            <person name="Blechschmidt K."/>
            <person name="Bloom T."/>
            <person name="Borowsky M.L."/>
            <person name="Butler J."/>
            <person name="Cook A."/>
            <person name="Corum B."/>
            <person name="DeArellano K."/>
            <person name="DeCaprio D."/>
            <person name="Dooley K.T."/>
            <person name="Dorris L. III"/>
            <person name="Engels R."/>
            <person name="Gloeckner G."/>
            <person name="Hafez N."/>
            <person name="Hagopian D.S."/>
            <person name="Hall J.L."/>
            <person name="Ishikawa S.K."/>
            <person name="Jaffe D.B."/>
            <person name="Kamat A."/>
            <person name="Kudoh J."/>
            <person name="Lehmann R."/>
            <person name="Lokitsang T."/>
            <person name="Macdonald P."/>
            <person name="Major J.E."/>
            <person name="Matthews C.D."/>
            <person name="Mauceli E."/>
            <person name="Menzel U."/>
            <person name="Mihalev A.H."/>
            <person name="Minoshima S."/>
            <person name="Murayama Y."/>
            <person name="Naylor J.W."/>
            <person name="Nicol R."/>
            <person name="Nguyen C."/>
            <person name="O'Leary S.B."/>
            <person name="O'Neill K."/>
            <person name="Parker S.C.J."/>
            <person name="Polley A."/>
            <person name="Raymond C.K."/>
            <person name="Reichwald K."/>
            <person name="Rodriguez J."/>
            <person name="Sasaki T."/>
            <person name="Schilhabel M."/>
            <person name="Siddiqui R."/>
            <person name="Smith C.L."/>
            <person name="Sneddon T.P."/>
            <person name="Talamas J.A."/>
            <person name="Tenzin P."/>
            <person name="Topham K."/>
            <person name="Venkataraman V."/>
            <person name="Wen G."/>
            <person name="Yamazaki S."/>
            <person name="Young S.K."/>
            <person name="Zeng Q."/>
            <person name="Zimmer A.R."/>
            <person name="Rosenthal A."/>
            <person name="Birren B.W."/>
            <person name="Platzer M."/>
            <person name="Shimizu N."/>
            <person name="Lander E.S."/>
        </authorList>
    </citation>
    <scope>NUCLEOTIDE SEQUENCE [LARGE SCALE GENOMIC DNA]</scope>
</reference>
<reference key="9">
    <citation type="journal article" date="2004" name="Genome Res.">
        <title>The status, quality, and expansion of the NIH full-length cDNA project: the Mammalian Gene Collection (MGC).</title>
        <authorList>
            <consortium name="The MGC Project Team"/>
        </authorList>
    </citation>
    <scope>NUCLEOTIDE SEQUENCE [LARGE SCALE MRNA] (ISOFORM 5)</scope>
    <scope>PARTIAL NUCLEOTIDE SEQUENCE [LARGE SCALE MRNA] (ISOFORM 2)</scope>
    <source>
        <tissue>Brain</tissue>
        <tissue>Spinal ganglion</tissue>
    </source>
</reference>
<reference key="10">
    <citation type="journal article" date="1991" name="Arterioscler. Thromb.">
        <title>Characterization of a human high density lipoprotein-associated protein, NA1/NA2. Identity with SP-40,40, an inhibitor of complement-mediated cytolysis.</title>
        <authorList>
            <person name="James R.W."/>
            <person name="Hochstrasser A.-C."/>
            <person name="Borghini I."/>
            <person name="Martin B.M."/>
            <person name="Pometta D."/>
            <person name="Hochstrasser D.F."/>
        </authorList>
    </citation>
    <scope>PROTEIN SEQUENCE OF 23-33; 229-242; 303-317 AND 397-403</scope>
    <scope>FUNCTION</scope>
    <scope>SUBUNIT</scope>
    <scope>INTERACTION WITH APOA1</scope>
</reference>
<reference key="11">
    <citation type="journal article" date="1990" name="J. Biol. Chem.">
        <title>Purification and characterization of apolipoprotein J.</title>
        <authorList>
            <person name="de Silva H."/>
            <person name="Stuart W.D."/>
            <person name="Park Y.B."/>
            <person name="Mao S.J.T."/>
            <person name="Gil C.M."/>
            <person name="Wetterau J.R."/>
            <person name="Busch S.J."/>
            <person name="Harmony J.A.K."/>
        </authorList>
    </citation>
    <scope>PROTEIN SEQUENCE OF 23-52 AND 228-257</scope>
    <scope>SUBUNIT</scope>
    <scope>DISULFIDE BOND</scope>
    <scope>PROTEOLYTIC PROCESSING</scope>
    <scope>GLYCOSYLATION</scope>
    <scope>SUBCELLULAR LOCATION</scope>
    <scope>TISSUE SPECIFICITY</scope>
</reference>
<reference key="12">
    <citation type="journal article" date="1993" name="Biochem. J.">
        <title>The cerebrospinal-fluid soluble form of Alzheimer's amyloid beta is complexed to SP-40,40 (apolipoprotein J), an inhibitor of the complement membrane-attack complex.</title>
        <authorList>
            <person name="Ghiso J."/>
            <person name="Matsubara E."/>
            <person name="Koudinov A."/>
            <person name="Choi-Miura N.-H."/>
            <person name="Tomita M."/>
            <person name="Wisniewski T."/>
            <person name="Frangione B."/>
        </authorList>
    </citation>
    <scope>PROTEIN SEQUENCE OF 23-41 AND 228-246</scope>
    <scope>INTERACTION WITH APP</scope>
    <scope>SUBCELLULAR LOCATION</scope>
    <scope>DISULFIDE BOND</scope>
    <scope>TISSUE SPECIFICITY</scope>
</reference>
<reference key="13">
    <citation type="journal article" date="1989" name="Mol. Immunol.">
        <title>A serum protein SP40,40 modulates the formation of membrane attack complex of complement on erythrocytes.</title>
        <authorList>
            <person name="Choi N.H."/>
            <person name="Mazda T."/>
            <person name="Tomita M."/>
        </authorList>
    </citation>
    <scope>PROTEIN SEQUENCE OF 23-37 AND 228-242</scope>
    <scope>FUNCTION</scope>
    <scope>INTERACTION WITH COMPLEMENT COMPLEX</scope>
</reference>
<reference key="14">
    <citation type="journal article" date="1988" name="Appl. Theor. Electrophor.">
        <title>HDL particle associated proteins in plasma and cerebrospinal fluid: identification and partial sequencing.</title>
        <authorList>
            <person name="Hochstrasser A.-C."/>
            <person name="James R.W."/>
            <person name="Martin B.M."/>
            <person name="Harrington M."/>
            <person name="Hochstrasser D.F."/>
            <person name="Pometta D."/>
            <person name="Merril C.R."/>
        </authorList>
    </citation>
    <scope>PROTEIN SEQUENCE OF 23-33 AND 228-240</scope>
    <scope>SUBCELLULAR LOCATION</scope>
    <scope>TISSUE SPECIFICITY</scope>
</reference>
<reference key="15">
    <citation type="journal article" date="1990" name="Biochemistry">
        <title>Apolipoprotein J: structure and tissue distribution.</title>
        <authorList>
            <person name="de Silva H.V."/>
            <person name="Harmony J.A.K."/>
            <person name="Stuart W.D."/>
            <person name="Gil C.M."/>
            <person name="Robbins J."/>
        </authorList>
    </citation>
    <scope>NUCLEOTIDE SEQUENCE [MRNA] OF 34-449 (ISOFORMS 1/2/4/5/6)</scope>
    <scope>PROTEIN SEQUENCE OF 124-127; 195-221; 254-268; 336-353 AND 442-449</scope>
    <scope>TISSUE SPECIFICITY</scope>
    <source>
        <tissue>Liver</tissue>
    </source>
</reference>
<reference key="16">
    <citation type="journal article" date="1991" name="Proc. Natl. Acad. Sci. U.S.A.">
        <title>Human gliomas and epileptic foci express high levels of a mRNA related to rat testicular sulfated glycoprotein 2, a purported marker of cell death.</title>
        <authorList>
            <person name="Danik M."/>
            <person name="Chabot J.G."/>
            <person name="Mercier C."/>
            <person name="Benabid A.L."/>
            <person name="Chauvin C."/>
            <person name="Quirion R."/>
            <person name="Suh M."/>
        </authorList>
    </citation>
    <scope>NUCLEOTIDE SEQUENCE [MRNA] OF 61-449</scope>
    <source>
        <tissue>Astrocytoma</tissue>
    </source>
</reference>
<reference key="17">
    <citation type="submission" date="1993-01" db="EMBL/GenBank/DDBJ databases">
        <authorList>
            <person name="Glew M.D."/>
            <person name="Kirszbaum L."/>
            <person name="Bozas S.E."/>
            <person name="Walker I.D."/>
        </authorList>
    </citation>
    <scope>NUCLEOTIDE SEQUENCE [GENOMIC DNA] OF 140-449</scope>
    <source>
        <tissue>Fetal liver</tissue>
    </source>
</reference>
<reference key="18">
    <citation type="journal article" date="1989" name="EMBO J.">
        <title>Molecular cloning and characterization of the novel, human complement-associated protein, SP-40,40: a link between the complement and reproductive systems.</title>
        <authorList>
            <person name="Kirszbaum L."/>
            <person name="Sharpe J.A."/>
            <person name="Murphy B."/>
            <person name="D'Apice J.F.A."/>
            <person name="Classon B."/>
            <person name="Hudson P."/>
            <person name="Walker I.D."/>
        </authorList>
    </citation>
    <scope>PARTIAL NUCLEOTIDE SEQUENCE [MRNA] (ISOFORM 2)</scope>
    <scope>PARTIAL PROTEIN SEQUENCE</scope>
    <scope>FUNCTION</scope>
    <source>
        <tissue>Liver</tissue>
    </source>
</reference>
<reference key="19">
    <citation type="journal article" date="1992" name="FEBS Lett.">
        <title>SP-40,40, a protein involved in the control of the complement pathway, possesses a unique array of disulphide bridges.</title>
        <authorList>
            <person name="Kirszbaum L."/>
            <person name="Bozas S.E."/>
            <person name="Walker I.D."/>
        </authorList>
    </citation>
    <scope>PARTIAL PROTEIN SEQUENCE</scope>
    <scope>FUNCTION</scope>
    <scope>DISULFIDE BONDS</scope>
    <scope>GLYCOSYLATION AT ASN-86; ASN-103; ASN-145; ASN-291; ASN-354 AND ASN-374</scope>
</reference>
<reference key="20">
    <citation type="submission" date="2003-12" db="EMBL/GenBank/DDBJ databases">
        <title>Identification of human aging-associated gene.</title>
        <authorList>
            <person name="Kim J.W."/>
        </authorList>
    </citation>
    <scope>PARTIAL NUCLEOTIDE SEQUENCE [LARGE SCALE MRNA] (ISOFORM 2)</scope>
</reference>
<reference key="21">
    <citation type="journal article" date="1991" name="Biochim. Biophys. Acta">
        <title>The apolipoprotein A-I binding protein of placenta and the SP-40,40 protein of human blood are different proteins which both bind to apolipoprotein A-I.</title>
        <authorList>
            <person name="Ehnholm C."/>
            <person name="Bozas S.E."/>
            <person name="Tenkanen H."/>
            <person name="Kirszbaum L."/>
            <person name="Metso J."/>
            <person name="Murphy B."/>
            <person name="Walker I.D."/>
        </authorList>
    </citation>
    <scope>INTERACTION WITH APOA1</scope>
</reference>
<reference key="22">
    <citation type="journal article" date="1992" name="J. Biochem.">
        <title>Identification of the disulfide bonds in human plasma protein SP-40,40 (apolipoprotein-J).</title>
        <authorList>
            <person name="Choi-Miura N.H."/>
            <person name="Takahashi Y."/>
            <person name="Nakano Y."/>
            <person name="Tobe T."/>
            <person name="Tomita M."/>
        </authorList>
    </citation>
    <scope>DISULFIDE BONDS</scope>
</reference>
<reference key="23">
    <citation type="journal article" date="1994" name="Biochemistry">
        <title>Apolipoprotein J is associated with paraoxonase in human plasma.</title>
        <authorList>
            <person name="Kelso G.J."/>
            <person name="Stuart W.D."/>
            <person name="Richter R.J."/>
            <person name="Furlong C.E."/>
            <person name="Jordan-Starck T.C."/>
            <person name="Harmony J.A.K."/>
        </authorList>
    </citation>
    <scope>INTERACTION WITH PON1</scope>
    <scope>SUBCELLULAR LOCATION</scope>
    <scope>TISSUE SPECIFICITY</scope>
</reference>
<reference key="24">
    <citation type="journal article" date="1996" name="Biochemistry">
        <title>Interaction of transforming growth factor beta receptors with apolipoprotein J/clusterin.</title>
        <authorList>
            <person name="Reddy K.B."/>
            <person name="Karode M.C."/>
            <person name="Harmony A.K."/>
            <person name="Howe P.H."/>
        </authorList>
    </citation>
    <scope>INTERACTION WITH TGFBR2 AND ACVR1</scope>
</reference>
<reference key="25">
    <citation type="journal article" date="1997" name="Biochemistry">
        <title>Potent inhibition of terminal complement assembly by clusterin: characterization of its impact on C9 polymerization.</title>
        <authorList>
            <person name="McDonald J.F."/>
            <person name="Nelsestuen G.L."/>
        </authorList>
    </citation>
    <scope>FUNCTION</scope>
    <scope>INTERACTION WITH THE COMPLEMENT MEMBRANE ATTACK COMPLEX</scope>
</reference>
<reference key="26">
    <citation type="journal article" date="1997" name="Protein Sci.">
        <title>Identification and characterization of glycosylation sites in human serum clusterin.</title>
        <authorList>
            <person name="Kapron J.T."/>
            <person name="Hilliard G.M."/>
            <person name="Lakins J.N."/>
            <person name="Tenniswood M.P."/>
            <person name="West K.A."/>
            <person name="Carr S.A."/>
            <person name="Crabb J.W."/>
        </authorList>
    </citation>
    <scope>GLYCOSYLATION AT ASN-86; ASN-103; ASN-145; ASN-291; ASN-354 AND ASN-374</scope>
    <source>
        <tissue>Serum</tissue>
    </source>
</reference>
<reference key="27">
    <citation type="journal article" date="2000" name="Biochemistry">
        <title>Clusterin is an ATP-independent chaperone with very broad substrate specificity that stabilizes stressed proteins in a folding-competent state.</title>
        <authorList>
            <person name="Poon S."/>
            <person name="Easterbrook-Smith S.B."/>
            <person name="Rybchyn M.S."/>
            <person name="Carver J.A."/>
            <person name="Wilson M.R."/>
        </authorList>
    </citation>
    <scope>FUNCTION</scope>
    <scope>SUBCELLULAR LOCATION</scope>
    <scope>ABSENCE OF ATPASE ACTIVITY</scope>
    <scope>TISSUE SPECIFICITY</scope>
</reference>
<reference key="28">
    <citation type="journal article" date="2002" name="Eur. J. Biochem.">
        <title>Suppression of apolipoprotein C-II amyloid formation by the extracellular chaperone, clusterin.</title>
        <authorList>
            <person name="Hatters D.M."/>
            <person name="Wilson M.R."/>
            <person name="Easterbrook-Smith S.B."/>
            <person name="Howlett G.J."/>
        </authorList>
    </citation>
    <scope>FUNCTION</scope>
    <scope>SUBUNIT</scope>
</reference>
<reference key="29">
    <citation type="journal article" date="2002" name="J. Biol. Chem.">
        <title>Mildly acidic pH activates the extracellular molecular chaperone clusterin.</title>
        <authorList>
            <person name="Poon S."/>
            <person name="Rybchyn M.S."/>
            <person name="Easterbrook-Smith S.B."/>
            <person name="Carver J.A."/>
            <person name="Pankhurst G.J."/>
            <person name="Wilson M.R."/>
        </authorList>
    </citation>
    <scope>FUNCTION</scope>
    <scope>SUBUNIT</scope>
    <scope>CIRCULAR DICHROISM</scope>
</reference>
<reference key="30">
    <citation type="journal article" date="2003" name="J. Biol. Chem.">
        <title>Synthesis and functional analyses of nuclear clusterin, a cell death protein.</title>
        <authorList>
            <person name="Leskov K.S."/>
            <person name="Klokov D.Y."/>
            <person name="Li J."/>
            <person name="Kinsella T.J."/>
            <person name="Boothman D.A."/>
        </authorList>
    </citation>
    <scope>ALTERNATIVE SPLICING</scope>
    <scope>IDENTIFICATION OF ISOFORM 4</scope>
    <scope>SUBCELLULAR LOCATION</scope>
</reference>
<reference key="31">
    <citation type="journal article" date="2003" name="J. Biol. Chem.">
        <title>Essential requirement of apolipoprotein J (clusterin) signaling for IkappaB expression and regulation of NF-kappaB activity.</title>
        <authorList>
            <person name="Santilli G."/>
            <person name="Aronow B.J."/>
            <person name="Sala A."/>
        </authorList>
    </citation>
    <scope>FUNCTION</scope>
</reference>
<reference key="32">
    <citation type="journal article" date="2003" name="Nat. Biotechnol.">
        <title>Identification and quantification of N-linked glycoproteins using hydrazide chemistry, stable isotope labeling and mass spectrometry.</title>
        <authorList>
            <person name="Zhang H."/>
            <person name="Li X.-J."/>
            <person name="Martin D.B."/>
            <person name="Aebersold R."/>
        </authorList>
    </citation>
    <scope>GLYCOSYLATION AT ASN-354</scope>
    <source>
        <tissue>Serum</tissue>
    </source>
</reference>
<reference key="33">
    <citation type="journal article" date="2004" name="Oncogene">
        <title>Isolation and characterization of a novel gene CLUAP1 whose expression is frequently upregulated in colon cancer.</title>
        <authorList>
            <person name="Takahashi M."/>
            <person name="Lin Y.-M."/>
            <person name="Nakamura Y."/>
            <person name="Furukawa Y."/>
        </authorList>
    </citation>
    <scope>INTERACTION WITH CLUAP1</scope>
</reference>
<reference key="34">
    <citation type="journal article" date="2004" name="Proteomics">
        <title>Screening for N-glycosylated proteins by liquid chromatography mass spectrometry.</title>
        <authorList>
            <person name="Bunkenborg J."/>
            <person name="Pilch B.J."/>
            <person name="Podtelejnikov A.V."/>
            <person name="Wisniewski J.R."/>
        </authorList>
    </citation>
    <scope>GLYCOSYLATION [LARGE SCALE ANALYSIS] AT ASN-354 AND ASN-374</scope>
    <source>
        <tissue>Plasma</tissue>
    </source>
</reference>
<reference key="35">
    <citation type="journal article" date="2005" name="J. Proteome Res.">
        <title>Human plasma N-glycoproteome analysis by immunoaffinity subtraction, hydrazide chemistry, and mass spectrometry.</title>
        <authorList>
            <person name="Liu T."/>
            <person name="Qian W.-J."/>
            <person name="Gritsenko M.A."/>
            <person name="Camp D.G. II"/>
            <person name="Monroe M.E."/>
            <person name="Moore R.J."/>
            <person name="Smith R.D."/>
        </authorList>
    </citation>
    <scope>GLYCOSYLATION [LARGE SCALE ANALYSIS] AT ASN-86; ASN-103; ASN-145; ASN-291; ASN-354 AND ASN-374</scope>
    <source>
        <tissue>Plasma</tissue>
    </source>
</reference>
<reference key="36">
    <citation type="journal article" date="2005" name="Nat. Cell Biol.">
        <title>Clusterin inhibits apoptosis by interacting with activated Bax.</title>
        <authorList>
            <person name="Zhang H."/>
            <person name="Kim J.K."/>
            <person name="Edwards C.A."/>
            <person name="Xu Z."/>
            <person name="Taichman R."/>
            <person name="Wang C.Y."/>
        </authorList>
    </citation>
    <scope>FUNCTION</scope>
    <scope>SUBCELLULAR LOCATION</scope>
    <scope>INTERACTION WITH BAX</scope>
</reference>
<reference key="37">
    <citation type="journal article" date="2006" name="Cell. Microbiol.">
        <title>Transcriptomic and proteomic analyses of rhabdomyosarcoma cells reveal differential cellular gene expression in response to enterovirus 71 infection.</title>
        <authorList>
            <person name="Leong W.F."/>
            <person name="Chow V.T."/>
        </authorList>
    </citation>
    <scope>INDUCTION</scope>
    <scope>IDENTIFICATION BY MASS SPECTROMETRY</scope>
</reference>
<reference key="38">
    <citation type="journal article" date="2006" name="J. Proteome Res.">
        <title>Identification of N-linked glycoproteins in human saliva by glycoprotein capture and mass spectrometry.</title>
        <authorList>
            <person name="Ramachandran P."/>
            <person name="Boontheung P."/>
            <person name="Xie Y."/>
            <person name="Sondej M."/>
            <person name="Wong D.T."/>
            <person name="Loo J.A."/>
        </authorList>
    </citation>
    <scope>GLYCOSYLATION [LARGE SCALE ANALYSIS] AT ASN-374</scope>
    <source>
        <tissue>Saliva</tissue>
    </source>
</reference>
<reference key="39">
    <citation type="journal article" date="2006" name="Mol. Cell. Proteomics">
        <title>Elucidation of N-glycosylation sites on human platelet proteins: a glycoproteomic approach.</title>
        <authorList>
            <person name="Lewandrowski U."/>
            <person name="Moebius J."/>
            <person name="Walter U."/>
            <person name="Sickmann A."/>
        </authorList>
    </citation>
    <scope>GLYCOSYLATION [LARGE SCALE ANALYSIS] AT ASN-374</scope>
    <source>
        <tissue>Platelet</tissue>
    </source>
</reference>
<reference key="40">
    <citation type="journal article" date="2007" name="Biochemistry">
        <title>Effects of glycosylation on the structure and function of the extracellular chaperone clusterin.</title>
        <authorList>
            <person name="Stewart E.M."/>
            <person name="Aquilina J.A."/>
            <person name="Easterbrook-Smith S.B."/>
            <person name="Murphy-Durland D."/>
            <person name="Jacobsen C."/>
            <person name="Moestrup S."/>
            <person name="Wilson M.R."/>
        </authorList>
    </citation>
    <scope>FUNCTION</scope>
    <scope>SUBUNIT</scope>
    <scope>INTERACTION WITH LRP2</scope>
    <scope>GLYCOSYLATION</scope>
    <scope>SUBCELLULAR LOCATION</scope>
    <scope>IDENTIFICATION BY MASS SPECTROMETRY</scope>
    <scope>CIRCULAR DICHROISM</scope>
    <scope>TISSUE SPECIFICITY</scope>
</reference>
<reference key="41">
    <citation type="journal article" date="2007" name="Biochim. Biophys. Acta">
        <title>Multiple pathways regulating the anti-apoptotic protein clusterin in breast cancer.</title>
        <authorList>
            <person name="Ranney M.K."/>
            <person name="Ahmed I.S."/>
            <person name="Potts K.R."/>
            <person name="Craven R.J."/>
        </authorList>
    </citation>
    <scope>FUNCTION</scope>
    <scope>INDUCTION</scope>
    <scope>PROTEASOMAL DEGRADATION</scope>
    <scope>SUBCELLULAR LOCATION</scope>
</reference>
<reference key="42">
    <citation type="journal article" date="2007" name="Biol. Reprod.">
        <title>Characterization of an eppin protein complex from human semen and spermatozoa.</title>
        <authorList>
            <person name="Wang Z."/>
            <person name="Widgren E.E."/>
            <person name="Richardson R.T."/>
            <person name="O'Rand M.G."/>
        </authorList>
    </citation>
    <scope>IDENTIFICATION IN A COMPLEX WITH LTF; SEMG1 AND EPPIN</scope>
</reference>
<reference key="43">
    <citation type="journal article" date="2007" name="FASEB J.">
        <title>The extracellular chaperone clusterin influences amyloid formation and toxicity by interacting with prefibrillar structures.</title>
        <authorList>
            <person name="Yerbury J.J."/>
            <person name="Poon S."/>
            <person name="Meehan S."/>
            <person name="Thompson B."/>
            <person name="Kumita J.R."/>
            <person name="Dobson C.M."/>
            <person name="Wilson M.R."/>
        </authorList>
    </citation>
    <scope>FUNCTION</scope>
    <scope>SUBUNIT</scope>
    <scope>SUBCELLULAR LOCATION</scope>
    <scope>TISSUE SPECIFICITY</scope>
</reference>
<reference key="44">
    <citation type="journal article" date="2007" name="J. Biol. Chem.">
        <title>Differential regulation of clusterin and its isoforms by androgens in prostate cells.</title>
        <authorList>
            <person name="Cochrane D.R."/>
            <person name="Wang Z."/>
            <person name="Muramaki M."/>
            <person name="Gleave M.E."/>
            <person name="Nelson C.C."/>
        </authorList>
    </citation>
    <scope>ALTERNATIVE SPLICING</scope>
    <scope>IDENTIFICATION OF ISOFORMS 1 AND 2</scope>
    <scope>INDUCTION BY ANDROGEN</scope>
</reference>
<reference key="45">
    <citation type="journal article" date="2007" name="J. Mol. Biol.">
        <title>The extracellular chaperone clusterin potently inhibits human lysozyme amyloid formation by interacting with prefibrillar species.</title>
        <authorList>
            <person name="Kumita J.R."/>
            <person name="Poon S."/>
            <person name="Caddy G.L."/>
            <person name="Hagan C.L."/>
            <person name="Dumoulin M."/>
            <person name="Yerbury J.J."/>
            <person name="Stewart E.M."/>
            <person name="Robinson C.V."/>
            <person name="Wilson M.R."/>
            <person name="Dobson C.M."/>
        </authorList>
    </citation>
    <scope>FUNCTION</scope>
    <scope>SUBUNIT</scope>
</reference>
<reference key="46">
    <citation type="journal article" date="2007" name="Mol. Cell. Proteomics">
        <title>Clusterin expression in normal mucosa and colorectal cancer.</title>
        <authorList>
            <person name="Andersen C.L."/>
            <person name="Schepeler T."/>
            <person name="Thorsen K."/>
            <person name="Birkenkamp-Demtroder K."/>
            <person name="Mansilla F."/>
            <person name="Aaltonen L.A."/>
            <person name="Laurberg S."/>
            <person name="Orntoft T.F."/>
        </authorList>
    </citation>
    <scope>ALTERNATIVE SPLICING</scope>
    <scope>IDENTIFICATION OF ISOFORMS 1; 2 AND 5</scope>
    <scope>TISSUE SPECIFICITY</scope>
</reference>
<reference key="47">
    <citation type="journal article" date="2007" name="Traffic">
        <title>Stress-induced retrotranslocation of clusterin/ApoJ into the cytosol.</title>
        <authorList>
            <person name="Nizard P."/>
            <person name="Tetley S."/>
            <person name="Le Drean Y."/>
            <person name="Watrin T."/>
            <person name="Le Goff P."/>
            <person name="Wilson M.R."/>
            <person name="Michel D."/>
        </authorList>
    </citation>
    <scope>SUBCELLULAR LOCATION</scope>
    <scope>INTERACTION WITH SYVN1</scope>
    <scope>UBIQUITINATION</scope>
</reference>
<reference key="48">
    <citation type="journal article" date="2008" name="Proteomics">
        <title>Identification of N-linked glycoproteins in human milk by hydrophilic interaction liquid chromatography and mass spectrometry.</title>
        <authorList>
            <person name="Picariello G."/>
            <person name="Ferranti P."/>
            <person name="Mamone G."/>
            <person name="Roepstorff P."/>
            <person name="Addeo F."/>
        </authorList>
    </citation>
    <scope>GLYCOSYLATION [LARGE SCALE ANALYSIS] AT ASN-291 AND ASN-374</scope>
    <source>
        <tissue>Milk</tissue>
    </source>
</reference>
<reference key="49">
    <citation type="journal article" date="2009" name="J. Biol. Chem.">
        <title>Structural characterization of clusterin-chaperone client protein complexes.</title>
        <authorList>
            <person name="Wyatt A.R."/>
            <person name="Yerbury J.J."/>
            <person name="Wilson M.R."/>
        </authorList>
    </citation>
    <scope>FUNCTION</scope>
    <scope>SUBUNIT</scope>
</reference>
<reference key="50">
    <citation type="journal article" date="2009" name="J. Cell. Physiol.">
        <title>Clusterin is a short half-life, poly-ubiquitinated protein, which controls the fate of prostate cancer cells.</title>
        <authorList>
            <person name="Rizzi F."/>
            <person name="Caccamo A.E."/>
            <person name="Belloni L."/>
            <person name="Bettuzzi S."/>
        </authorList>
    </citation>
    <scope>FUNCTION</scope>
    <scope>SUBCELLULAR LOCATION</scope>
    <scope>UBIQUITINATION</scope>
</reference>
<reference key="51">
    <citation type="journal article" date="2009" name="J. Proteome Res.">
        <title>Glycoproteomics analysis of human liver tissue by combination of multiple enzyme digestion and hydrazide chemistry.</title>
        <authorList>
            <person name="Chen R."/>
            <person name="Jiang X."/>
            <person name="Sun D."/>
            <person name="Han G."/>
            <person name="Wang F."/>
            <person name="Ye M."/>
            <person name="Wang L."/>
            <person name="Zou H."/>
        </authorList>
    </citation>
    <scope>GLYCOSYLATION [LARGE SCALE ANALYSIS] AT ASN-86; ASN-103; ASN-145; ASN-354 AND ASN-374</scope>
    <source>
        <tissue>Liver</tissue>
    </source>
</reference>
<reference key="52">
    <citation type="journal article" date="2009" name="Mol. Cell. Proteomics">
        <title>A strategy for precise and large scale identification of core fucosylated glycoproteins.</title>
        <authorList>
            <person name="Jia W."/>
            <person name="Lu Z."/>
            <person name="Fu Y."/>
            <person name="Wang H.P."/>
            <person name="Wang L.H."/>
            <person name="Chi H."/>
            <person name="Yuan Z.F."/>
            <person name="Zheng Z.B."/>
            <person name="Song L.N."/>
            <person name="Han H.H."/>
            <person name="Liang Y.M."/>
            <person name="Wang J.L."/>
            <person name="Cai Y."/>
            <person name="Zhang Y.K."/>
            <person name="Deng Y.L."/>
            <person name="Ying W.T."/>
            <person name="He S.M."/>
            <person name="Qian X.H."/>
        </authorList>
    </citation>
    <scope>GLYCOSYLATION AT ASN-86 AND ASN-374</scope>
</reference>
<reference key="53">
    <citation type="journal article" date="2009" name="Nat. Methods">
        <title>Enrichment of glycopeptides for glycan structure and attachment site identification.</title>
        <authorList>
            <person name="Nilsson J."/>
            <person name="Rueetschi U."/>
            <person name="Halim A."/>
            <person name="Hesse C."/>
            <person name="Carlsohn E."/>
            <person name="Brinkmalm G."/>
            <person name="Larson G."/>
        </authorList>
    </citation>
    <scope>GLYCOSYLATION [LARGE SCALE ANALYSIS] AT ASN-374</scope>
    <scope>STRUCTURE OF CARBOHYDRATES</scope>
    <source>
        <tissue>Cerebrospinal fluid</tissue>
    </source>
</reference>
<reference key="54">
    <citation type="journal article" date="2010" name="J. Biol. Chem.">
        <title>Identification of human plasma proteins as major clients for the extracellular chaperone clusterin.</title>
        <authorList>
            <person name="Wyatt A.R."/>
            <person name="Wilson M.R."/>
        </authorList>
    </citation>
    <scope>FUNCTION</scope>
</reference>
<reference key="55">
    <citation type="journal article" date="2010" name="Mol. Cancer Res.">
        <title>Clusterin facilitates COMMD1 and I-kappaB degradation to enhance NF-kappaB activity in prostate cancer cells.</title>
        <authorList>
            <person name="Zoubeidi A."/>
            <person name="Ettinger S."/>
            <person name="Beraldi E."/>
            <person name="Hadaschik B."/>
            <person name="Zardan A."/>
            <person name="Klomp L.W."/>
            <person name="Nelson C.C."/>
            <person name="Rennie P.S."/>
            <person name="Gleave M.E."/>
        </authorList>
    </citation>
    <scope>FUNCTION</scope>
    <scope>SUBCELLULAR LOCATION</scope>
    <scope>INTERACTION WITH COMMD1; UBIQUITIN; CUL1 AND BTRC</scope>
    <scope>IDENTIFICATION IN A E3 UBIQUITIN-PROTEIN LIGASE COMPLEX</scope>
</reference>
<reference key="56">
    <citation type="journal article" date="2011" name="Cell. Mol. Life Sci.">
        <title>Clusterin facilitates in vivo clearance of extracellular misfolded proteins.</title>
        <authorList>
            <person name="Wyatt A.R."/>
            <person name="Yerbury J.J."/>
            <person name="Berghofer P."/>
            <person name="Greguric I."/>
            <person name="Katsifis A."/>
            <person name="Dobson C.M."/>
            <person name="Wilson M.R."/>
        </authorList>
    </citation>
    <scope>FUNCTION</scope>
</reference>
<reference key="57">
    <citation type="journal article" date="2012" name="J. Cell. Physiol.">
        <title>Human nuclear clusterin mediates apoptosis by interacting with Bcl-XL through C-terminal coiled coil domain.</title>
        <authorList>
            <person name="Kim N."/>
            <person name="Yoo J.C."/>
            <person name="Han J.Y."/>
            <person name="Hwang E.M."/>
            <person name="Kim Y.S."/>
            <person name="Jeong E.Y."/>
            <person name="Sun C.H."/>
            <person name="Yi G.S."/>
            <person name="Roh G.S."/>
            <person name="Kim H.J."/>
            <person name="Kang S.S."/>
            <person name="Cho G.J."/>
            <person name="Park J.Y."/>
            <person name="Choi W.S."/>
        </authorList>
    </citation>
    <scope>INTERACTION WITH BCL2L1</scope>
    <scope>FUNCTION</scope>
</reference>
<reference key="58">
    <citation type="journal article" date="2013" name="Oncogene">
        <title>GRP78 regulates clusterin stability, retrotranslocation and mitochondrial localization under ER stress in prostate cancer.</title>
        <authorList>
            <person name="Li N."/>
            <person name="Zoubeidi A."/>
            <person name="Beraldi E."/>
            <person name="Gleave M.E."/>
        </authorList>
    </citation>
    <scope>INTERACTION WITH HSPA5</scope>
    <scope>SUBCELLULAR LOCATION</scope>
    <scope>MUTAGENESIS OF ASN-86; ASN-103; ASN-145; ASN-291; ASN-354 AND ASN-374</scope>
    <scope>GLYCOSYLATION</scope>
    <scope>FUNCTION</scope>
</reference>
<reference key="59">
    <citation type="journal article" date="2014" name="Cell. Physiol. Biochem.">
        <title>The chaperone activity of clusterin is dependent on glycosylation and redox environment.</title>
        <authorList>
            <person name="Rohne P."/>
            <person name="Prochnow H."/>
            <person name="Wolf S."/>
            <person name="Renner B."/>
            <person name="Koch-Brandt C."/>
        </authorList>
    </citation>
    <scope>GLYCOSYLATION</scope>
    <scope>PROTEOLYTIC CLEAVAGE</scope>
    <scope>MUTAGENESIS OF VAL-226 AND ARG-227</scope>
    <scope>SITE</scope>
</reference>
<reference key="60">
    <citation type="journal article" date="2014" name="J. Proteomics">
        <title>An enzyme assisted RP-RPLC approach for in-depth analysis of human liver phosphoproteome.</title>
        <authorList>
            <person name="Bian Y."/>
            <person name="Song C."/>
            <person name="Cheng K."/>
            <person name="Dong M."/>
            <person name="Wang F."/>
            <person name="Huang J."/>
            <person name="Sun D."/>
            <person name="Wang L."/>
            <person name="Ye M."/>
            <person name="Zou H."/>
        </authorList>
    </citation>
    <scope>PHOSPHORYLATION [LARGE SCALE ANALYSIS] AT SER-133 AND SER-396</scope>
    <scope>IDENTIFICATION BY MASS SPECTROMETRY [LARGE SCALE ANALYSIS]</scope>
    <source>
        <tissue>Liver</tissue>
    </source>
</reference>
<reference key="61">
    <citation type="journal article" date="2014" name="J. Biol. Chem.">
        <title>Clusterin is a ligand for apolipoprotein E receptor 2 (ApoER2) and very low density lipoprotein receptor (VLDLR) and signals via the Reelin-signaling pathway.</title>
        <authorList>
            <person name="Leeb C."/>
            <person name="Eresheim C."/>
            <person name="Nimpf J."/>
        </authorList>
    </citation>
    <scope>INTERACTION WITH VLDLR AND LRP8</scope>
</reference>
<reference key="62">
    <citation type="journal article" date="2021" name="Nat. Commun.">
        <title>Structural basis of soluble membrane attack complex packaging for clearance.</title>
        <authorList>
            <person name="Menny A."/>
            <person name="Lukassen M.V."/>
            <person name="Couves E.C."/>
            <person name="Franc V."/>
            <person name="Heck A.J.R."/>
            <person name="Bubeck D."/>
        </authorList>
    </citation>
    <scope>FUNCTION</scope>
    <scope>INTERACTION WITH THE COMPLEMENT MEMBRANE ATTACK COMPLEX</scope>
</reference>
<accession>P10909</accession>
<accession>B2R9Q1</accession>
<accession>B3KSE6</accession>
<accession>P11380</accession>
<accession>P11381</accession>
<accession>Q2TU75</accession>
<accession>Q5HYC1</accession>
<accession>Q7Z5B9</accession>
<gene>
    <name evidence="71" type="primary">CLU</name>
    <name evidence="64" type="synonym">APOJ</name>
    <name evidence="66" type="synonym">CLI</name>
    <name type="synonym">KUB1</name>
    <name type="ORF">AAG4</name>
</gene>
<comment type="function">
    <molecule>Isoform 1</molecule>
    <text evidence="2 3 4 5 6 9 13 14 20 22 23 27 29 30 33 36 37 38 40 42 45 46 47 49 54">Functions as extracellular chaperone that prevents aggregation of non native proteins (PubMed:11123922, PubMed:19535339). Prevents stress-induced aggregation of blood plasma proteins (PubMed:11123922, PubMed:12176985, PubMed:17260971, PubMed:19996109). Inhibits formation of amyloid fibrils by APP, APOC2, B2M, CALCA, CSN3, SNCA and aggregation-prone LYZ variants (in vitro) (PubMed:12047389, PubMed:17407782, PubMed:17412999). Does not require ATP (PubMed:11123922). Maintains partially unfolded proteins in a state appropriate for subsequent refolding by other chaperones, such as HSPA8/HSC70 (PubMed:11123922). Does not refold proteins by itself (PubMed:11123922). Binding to cell surface receptors triggers internalization of the chaperone-client complex and subsequent lysosomal or proteasomal degradation (PubMed:21505792). Protects cells against apoptosis and against cytolysis by complement: inhibits assembly of the complement membrane attack complex (MAC) by preventing polymerization of C9 pore component of the MAC complex (PubMed:2780565, PubMed:1903064, PubMed:2601725, PubMed:2721499, PubMed:1551440, PubMed:9200695, PubMed:34667172). Intracellular forms interact with ubiquitin and SCF (SKP1-CUL1-F-box protein) E3 ubiquitin-protein ligase complexes and promote the ubiquitination and subsequent proteasomal degradation of target proteins (PubMed:20068069). Promotes proteasomal degradation of COMMD1 and IKBKB (PubMed:20068069). Modulates NF-kappa-B transcriptional activity (PubMed:12882985). A mitochondrial form suppresses BAX-dependent release of cytochrome c into the cytoplasm and inhibit apoptosis (PubMed:16113678, PubMed:17689225). Plays a role in the regulation of cell proliferation (PubMed:19137541). An intracellular form suppresses stress-induced apoptosis by stabilizing mitochondrial membrane integrity through interaction with HSPA5 (PubMed:22689054). Secreted form does not affect caspase or BAX-mediated intrinsic apoptosis and TNF-induced NF-kappa-B-activity (PubMed:24073260). Secreted form act as an important modulator during neuronal differentiation through interaction with STMN3 (By similarity). Plays a role in the clearance of immune complexes that arise during cell injury (By similarity).</text>
</comment>
<comment type="function">
    <molecule>Isoform 6</molecule>
    <text evidence="42">Does not affect caspase or BAX-mediated intrinsic apoptosis and TNF-induced NF-kappa-B-activity.</text>
</comment>
<comment type="function">
    <molecule>Isoform 4</molecule>
    <text evidence="39 42">Does not affect caspase or BAX-mediated intrinsic apoptosis and TNF-induced NF-kappa-B-activity (PubMed:24073260). Promotes cell death through interaction with BCL2L1 that releases and activates BAX (PubMed:21567405).</text>
</comment>
<comment type="subunit">
    <text evidence="2 3 5 6 11 12 13 14 20 22 23 24 25 26 29 33 34 37 39 40 41 43 45 47 49 51 52 53 54">Antiparallel disulfide-linked heterodimer of an alpha chain and a beta chain (PubMed:12047389, PubMed:1491011, PubMed:1551440, PubMed:2387851, PubMed:2780565, PubMed:8328966). Self-associates and forms higher oligomers (PubMed:1903064). Interacts with a broad range of misfolded proteins, including APP, APOC2 and LYZ (PubMed:17407782, PubMed:17412999, PubMed:8328966). Slightly acidic pH promotes interaction with misfolded proteins (PubMed:12176985). Forms high-molecular weight oligomers upon interaction with misfolded proteins (PubMed:19535339). Interacts with APOA1, LRP2, CLUAP1 and PON1 (PubMed:15480429, PubMed:17260971, PubMed:1742316, PubMed:1903064, PubMed:8292612). Interacts with the complement membrane attack complex (PubMed:2601725, PubMed:9200695, PubMed:34667172). Interacts (via alpha chain) with XRCC6 (By similarity). Interacts with SYVN1, COMMD1, BTRC, CUL1 and with ubiquitin and SCF (SKP1-CUL1-F-box protein) E3 ubiquitin-protein ligase complexes (PubMed:17451556, PubMed:20068069). Interacts (via alpha chain) with BAX in stressed cells, where BAX undergoes a conformation change leading to association with the mitochondrial membrane (PubMed:16113678). Does not interact with BAX in unstressed cells (PubMed:16113678). Found in a complex with LTF, CLU, EPPIN and SEMG1 (PubMed:17567961). Interacts (immaturely glycosylated pre-secreted form) with HSPA5; this interaction promotes CLU stability and facilitates stress-induced CLU retrotranslocation from the secretory pathway to the mitochondria, thereby reducing stress-induced apoptosis by stabilizing mitochondrial membrane integrity (PubMed:22689054). Interacts (isoform 4) with BCL2L1; this interaction releases and activates BAX and promotes cell death (PubMed:21567405). Interacts with TGFBR2 and ACVR1 (PubMed:8555189). Interacts (secreted form) with STMN3; this interaction may act as an important modulator during neuronal differentiation (By similarity). Interacts with VLDLR and LRP8 (PubMed:24381170).</text>
</comment>
<comment type="interaction">
    <interactant intactId="EBI-1104674">
        <id>P10909</id>
    </interactant>
    <interactant intactId="EBI-8588930">
        <id>P18509</id>
        <label>ADCYAP1</label>
    </interactant>
    <organismsDiffer>false</organismsDiffer>
    <experiments>4</experiments>
</comment>
<comment type="interaction">
    <interactant intactId="EBI-1104674">
        <id>P10909</id>
    </interactant>
    <interactant intactId="EBI-77613">
        <id>P05067</id>
        <label>APP</label>
    </interactant>
    <organismsDiffer>false</organismsDiffer>
    <experiments>3</experiments>
</comment>
<comment type="interaction">
    <interactant intactId="EBI-1104674">
        <id>P10909</id>
    </interactant>
    <interactant intactId="EBI-2431589">
        <id>PRO_0000000093</id>
        <label>APP</label>
        <dbReference type="UniProtKB" id="P05067"/>
    </interactant>
    <organismsDiffer>false</organismsDiffer>
    <experiments>4</experiments>
</comment>
<comment type="interaction">
    <interactant intactId="EBI-1104674">
        <id>P10909</id>
    </interactant>
    <interactant intactId="EBI-529989">
        <id>Q9NRI5</id>
        <label>DISC1</label>
    </interactant>
    <organismsDiffer>false</organismsDiffer>
    <experiments>4</experiments>
</comment>
<comment type="interaction">
    <interactant intactId="EBI-1104674">
        <id>P10909</id>
    </interactant>
    <interactant intactId="EBI-852851">
        <id>P01100</id>
        <label>FOS</label>
    </interactant>
    <organismsDiffer>false</organismsDiffer>
    <experiments>2</experiments>
</comment>
<comment type="interaction">
    <interactant intactId="EBI-1104674">
        <id>P10909</id>
    </interactant>
    <interactant intactId="EBI-979862">
        <id>P30101</id>
        <label>PDIA3</label>
    </interactant>
    <organismsDiffer>false</organismsDiffer>
    <experiments>2</experiments>
</comment>
<comment type="interaction">
    <interactant intactId="EBI-1104674">
        <id>P10909</id>
    </interactant>
    <interactant intactId="EBI-781384">
        <id>P37231</id>
        <label>PPARG</label>
    </interactant>
    <organismsDiffer>false</organismsDiffer>
    <experiments>3</experiments>
</comment>
<comment type="interaction">
    <interactant intactId="EBI-1104674">
        <id>P10909</id>
    </interactant>
    <interactant intactId="EBI-985879">
        <id>P37840</id>
        <label>SNCA</label>
    </interactant>
    <organismsDiffer>false</organismsDiffer>
    <experiments>4</experiments>
</comment>
<comment type="interaction">
    <interactant intactId="EBI-4322678">
        <id>P10909-4</id>
    </interactant>
    <interactant intactId="EBI-287195">
        <id>Q07817-1</id>
        <label>BCL2L1</label>
    </interactant>
    <organismsDiffer>false</organismsDiffer>
    <experiments>6</experiments>
</comment>
<comment type="interaction">
    <interactant intactId="EBI-10961636">
        <id>P10909-5</id>
    </interactant>
    <interactant intactId="EBI-821758">
        <id>PRO_0000000092</id>
        <label>APP</label>
        <dbReference type="UniProtKB" id="P05067"/>
    </interactant>
    <organismsDiffer>false</organismsDiffer>
    <experiments>2</experiments>
</comment>
<comment type="interaction">
    <interactant intactId="EBI-10961636">
        <id>P10909-5</id>
    </interactant>
    <interactant intactId="EBI-12330065">
        <id>Q9NZV6</id>
        <label>MSRB1</label>
    </interactant>
    <organismsDiffer>false</organismsDiffer>
    <experiments>10</experiments>
</comment>
<comment type="subcellular location">
    <molecule>Isoform 1</molecule>
    <subcellularLocation>
        <location evidence="4 20 23 25 41 42 47 48 51 52">Secreted</location>
    </subcellularLocation>
    <text evidence="25">Can retrotranslocate from the secretory compartments to the cytosol upon cellular stress.</text>
</comment>
<comment type="subcellular location">
    <molecule>Isoform 4</molecule>
    <subcellularLocation>
        <location evidence="42">Cytoplasm</location>
    </subcellularLocation>
    <text evidence="42">Keeps cytoplasmic localization in stressed and unstressed cell.</text>
</comment>
<comment type="subcellular location">
    <molecule>Isoform 6</molecule>
    <subcellularLocation>
        <location evidence="42">Cytoplasm</location>
    </subcellularLocation>
    <text evidence="42">Keeps cytoplasmic localization in stressed and unstressed cell.</text>
</comment>
<comment type="subcellular location">
    <subcellularLocation>
        <location evidence="7 30">Nucleus</location>
    </subcellularLocation>
    <subcellularLocation>
        <location evidence="7 27 30 37 40 42">Cytoplasm</location>
    </subcellularLocation>
    <subcellularLocation>
        <location>Mitochondrion membrane</location>
        <topology>Peripheral membrane protein</topology>
        <orientation evidence="27">Cytoplasmic side</orientation>
    </subcellularLocation>
    <subcellularLocation>
        <location evidence="25 40 42">Cytoplasm</location>
        <location evidence="25 40 42">Cytosol</location>
    </subcellularLocation>
    <subcellularLocation>
        <location evidence="40">Microsome</location>
    </subcellularLocation>
    <subcellularLocation>
        <location evidence="14 40">Endoplasmic reticulum</location>
    </subcellularLocation>
    <subcellularLocation>
        <location evidence="14 40">Mitochondrion</location>
    </subcellularLocation>
    <subcellularLocation>
        <location evidence="14 27">Mitochondrion membrane</location>
    </subcellularLocation>
    <subcellularLocation>
        <location evidence="2">Cytoplasm</location>
        <location evidence="2">Perinuclear region</location>
    </subcellularLocation>
    <subcellularLocation>
        <location evidence="1">Cytoplasmic vesicle</location>
        <location evidence="1">Secretory vesicle</location>
        <location evidence="1">Chromaffin granule</location>
    </subcellularLocation>
    <text evidence="7 25 27 37 40 42">Secreted isoforms can retrotranslocate from the secretory compartments to the cytosol upon cellular stress (PubMed:17451556). Detected in perinuclear foci that may be aggresomes containing misfolded, ubiquitinated proteins (PubMed:20068069). Detected at the mitochondrion membrane upon induction of apoptosis (PubMed:17689225). Under ER stress, a immaturely glycosylated pre-secreted form retrotranslocates from the endoplasmic reticulum (ER)-Golgi network to the cytoplasm to localize in the mitochondria through HSPA5 interaction (PubMed:22689054). ER stress reduces secretion (PubMed:22689054). Under the stress, minor amounts of non-secreted forms accumulate in cytoplasm (PubMed:17451556, PubMed:22689054, PubMed:24073260). Non-secreted forms emerge mainly from failed translocation, alternative splicing or non-canonical initiation start codon (PubMed:12551933, PubMed:24073260).</text>
</comment>
<comment type="alternative products">
    <event type="alternative splicing"/>
    <isoform>
        <id>P10909-1</id>
        <name>1</name>
        <name>2</name>
        <name>CLU35</name>
        <name>sCLU</name>
        <sequence type="displayed"/>
    </isoform>
    <isoform>
        <id>P10909-2</id>
        <name>2</name>
        <name>1</name>
        <name>CLU34</name>
        <sequence type="described" ref="VSP_037661"/>
    </isoform>
    <isoform>
        <id>P10909-3</id>
        <name>3</name>
        <sequence type="described" ref="VSP_041475"/>
    </isoform>
    <isoform>
        <id>P10909-4</id>
        <name>4</name>
        <name evidence="57">nCLU</name>
        <sequence type="described" ref="VSP_041476"/>
    </isoform>
    <isoform>
        <id>P10909-5</id>
        <name>5</name>
        <name>CLU36</name>
        <sequence type="described" ref="VSP_041477"/>
    </isoform>
    <isoform>
        <id>P10909-6</id>
        <name>6</name>
        <sequence type="described" ref="VSP_060188 VSP_060192"/>
    </isoform>
</comment>
<comment type="tissue specificity">
    <text evidence="4 20 21 23 34 41 47 48 50 51 52">Detected in blood plasma, cerebrospinal fluid, milk, seminal plasma and colon mucosa. Detected in the germinal center of colon lymphoid nodules and in colon parasympathetic ganglia of the Auerbach plexus (at protein level). Ubiquitous. Detected in brain, testis, ovary, liver and pancreas, and at lower levels in kidney, heart, spleen and lung.</text>
</comment>
<comment type="induction">
    <text evidence="17 19 27">Up-regulated in response to enterovirus 71 (EV71) infection (at protein level) (PubMed:16548883). Up-regulated by agents that induce apoptosis, both at mRNA and protein level (PubMed:17689225). Isoform 1 is up-regulated by androgen (PubMed:17148459). Isoform 2 is down-regulated by androgen (PubMed:17148459).</text>
</comment>
<comment type="PTM">
    <text evidence="41 42 44">Proteolytically cleaved on its way through the secretory system, probably within the Golgi lumen (PubMed:2387851). Proteolytic cleavage is not necessary for its chaperone activity (PubMed:25402950). All non-secreted forms are not proteolytically cleaved (PubMed:24073260). Chaperone activity of uncleaved forms is dependent on a non-reducing environment (PubMed:25402950).</text>
</comment>
<comment type="PTM">
    <text evidence="25 30">Polyubiquitinated, leading to proteasomal degradation (PubMed:17451556, PubMed:19137541). Under cellular stress, the intracellular level of cleaved form is reduced due to proteasomal degradation (PubMed:17451556).</text>
</comment>
<comment type="PTM">
    <text evidence="20 40 41 42 44">Extensively glycosylated with sulfated N-linked carbohydrates (PubMed:17260971, PubMed:2387851). About 30% of the protein mass is comprised of complex N-linked carbohydrate (PubMed:2387851). Endoplasmic reticulum (ER) stress induces changes in glycosylation status and increases level of hypoglycosylated forms (PubMed:22689054). Core carbohydrates are essential for chaperone activity (PubMed:25402950). Non-secreted forms are hypoglycosylated or unglycosylated (PubMed:24073260).</text>
</comment>
<comment type="miscellaneous">
    <molecule>Isoform 1</molecule>
    <text evidence="42">Major isoform. Major isoform. Detectable at protein level in stressed and unstressed cells (PubMed:24073260).</text>
</comment>
<comment type="miscellaneous">
    <molecule>Isoform 4</molecule>
    <text evidence="42 57">Minor isoform that has been detected in a breast cancer cell line, but not in any other tissues or cell lines (PubMed:12551933). Not glycosylated. Not detected in unstressed cells. Detectable at low level in stressed cells (PubMed:24073260).</text>
</comment>
<comment type="miscellaneous">
    <molecule>Isoform 6</molecule>
    <text evidence="42">Translated from an unconventional translation initiation site CTG (PubMed:24073260). Not glycosylated (PubMed:24073260). Not detected in unstressed cells. Detectable at low level in stressed cells (PubMed:24073260).</text>
</comment>
<comment type="similarity">
    <text evidence="70">Belongs to the clusterin family.</text>
</comment>
<comment type="caution">
    <text evidence="7 42">Isoform 4 has been previously detected in cytosol and in the nuclei of apoptotic cells and promoted apoptosis following irradiation (PubMed:12551933). However the nuclear localization and apoptosis promotion has not been confirmed in other cell types (PubMed:24073260).</text>
</comment>
<comment type="sequence caution" evidence="70">
    <conflict type="erroneous initiation">
        <sequence resource="EMBL-CDS" id="AAA35692"/>
    </conflict>
    <text>Truncated N-terminus.</text>
</comment>
<comment type="sequence caution" evidence="70">
    <conflict type="erroneous initiation">
        <sequence resource="EMBL-CDS" id="AAB06508"/>
    </conflict>
    <text>Truncated N-terminus.</text>
</comment>
<comment type="sequence caution" evidence="70">
    <conflict type="miscellaneous discrepancy">
        <sequence resource="EMBL-CDS" id="AAB06508"/>
    </conflict>
    <text>Contaminating sequence.</text>
</comment>
<comment type="sequence caution" evidence="70">
    <conflict type="erroneous initiation">
        <sequence resource="EMBL-CDS" id="AAH10514"/>
    </conflict>
    <text>Truncated N-terminus.</text>
</comment>
<comment type="sequence caution" evidence="70">
    <conflict type="erroneous initiation">
        <sequence resource="EMBL-CDS" id="AAH19588"/>
    </conflict>
    <text>Truncated N-terminus.</text>
</comment>
<comment type="sequence caution" evidence="70">
    <conflict type="erroneous gene model prediction">
        <sequence resource="EMBL-CDS" id="AAP88927"/>
    </conflict>
</comment>
<comment type="sequence caution" evidence="70">
    <conflict type="erroneous initiation">
        <sequence resource="EMBL-CDS" id="AAP88927"/>
    </conflict>
    <text>Truncated N-terminus.</text>
</comment>
<comment type="sequence caution" evidence="70">
    <conflict type="erroneous initiation">
        <sequence resource="EMBL-CDS" id="AAT08041"/>
    </conflict>
    <text>Truncated N-terminus.</text>
</comment>
<comment type="sequence caution" evidence="70">
    <conflict type="erroneous initiation">
        <sequence resource="EMBL-CDS" id="BAG36598"/>
    </conflict>
    <text>Truncated N-terminus.</text>
</comment>
<comment type="sequence caution" evidence="70">
    <conflict type="erroneous initiation">
        <sequence resource="EMBL-CDS" id="CAA32847"/>
    </conflict>
    <text>Truncated N-terminus.</text>
</comment>
<comment type="online information" name="Atlas of Genetics and Cytogenetics in Oncology and Haematology">
    <link uri="https://atlasgeneticsoncology.org/gene/40107/CLU"/>
</comment>
<keyword id="KW-0002">3D-structure</keyword>
<keyword id="KW-0025">Alternative splicing</keyword>
<keyword id="KW-0053">Apoptosis</keyword>
<keyword id="KW-0143">Chaperone</keyword>
<keyword id="KW-0180">Complement pathway</keyword>
<keyword id="KW-0963">Cytoplasm</keyword>
<keyword id="KW-0968">Cytoplasmic vesicle</keyword>
<keyword id="KW-0903">Direct protein sequencing</keyword>
<keyword id="KW-1015">Disulfide bond</keyword>
<keyword id="KW-0256">Endoplasmic reticulum</keyword>
<keyword id="KW-0325">Glycoprotein</keyword>
<keyword id="KW-0391">Immunity</keyword>
<keyword id="KW-0399">Innate immunity</keyword>
<keyword id="KW-0472">Membrane</keyword>
<keyword id="KW-0492">Microsome</keyword>
<keyword id="KW-0496">Mitochondrion</keyword>
<keyword id="KW-0539">Nucleus</keyword>
<keyword id="KW-0597">Phosphoprotein</keyword>
<keyword id="KW-1267">Proteomics identification</keyword>
<keyword id="KW-1185">Reference proteome</keyword>
<keyword id="KW-0964">Secreted</keyword>
<keyword id="KW-0732">Signal</keyword>
<keyword id="KW-0832">Ubl conjugation</keyword>
<protein>
    <recommendedName>
        <fullName>Clusterin</fullName>
    </recommendedName>
    <alternativeName>
        <fullName evidence="68">Aging-associated gene 4 protein</fullName>
    </alternativeName>
    <alternativeName>
        <fullName evidence="64">Apolipoprotein J</fullName>
        <shortName>Apo-J</shortName>
    </alternativeName>
    <alternativeName>
        <fullName evidence="66">Complement cytolysis inhibitor</fullName>
        <shortName evidence="66">CLI</shortName>
    </alternativeName>
    <alternativeName>
        <fullName evidence="61 65">Complement-associated protein SP-40,40</fullName>
    </alternativeName>
    <alternativeName>
        <fullName>Ku70-binding protein 1</fullName>
    </alternativeName>
    <alternativeName>
        <fullName evidence="61">NA1/NA2</fullName>
    </alternativeName>
    <alternativeName>
        <fullName evidence="62">Sulfated glycoprotein 2</fullName>
        <shortName evidence="62">SGP-2</shortName>
    </alternativeName>
    <alternativeName>
        <fullName evidence="2">Testosterone-repressed prostate message 2</fullName>
        <shortName evidence="67">TRPM-2</shortName>
    </alternativeName>
    <component>
        <recommendedName>
            <fullName>Clusterin beta chain</fullName>
        </recommendedName>
        <alternativeName>
            <fullName evidence="63 64">ApoJalpha</fullName>
        </alternativeName>
        <alternativeName>
            <fullName evidence="66">Complement cytolysis inhibitor a chain</fullName>
        </alternativeName>
        <alternativeName>
            <fullName evidence="65">SP-40,40 beta-chain</fullName>
        </alternativeName>
    </component>
    <component>
        <recommendedName>
            <fullName>Clusterin alpha chain</fullName>
        </recommendedName>
        <alternativeName>
            <fullName evidence="63 64">ApoJbeta</fullName>
        </alternativeName>
        <alternativeName>
            <fullName evidence="66">Complement cytolysis inhibitor b chain</fullName>
        </alternativeName>
        <alternativeName>
            <fullName evidence="65">SP-40,40 alpha-chain</fullName>
        </alternativeName>
    </component>
</protein>
<feature type="signal peptide" evidence="29 41 45 47 48 52">
    <location>
        <begin position="1"/>
        <end position="22"/>
    </location>
</feature>
<feature type="chain" id="PRO_0000005529" description="Clusterin">
    <location>
        <begin position="23"/>
        <end position="449"/>
    </location>
</feature>
<feature type="chain" id="PRO_0000005530" description="Clusterin beta chain" evidence="41 46">
    <location>
        <begin position="23"/>
        <end position="227"/>
    </location>
</feature>
<feature type="chain" id="PRO_0000005531" description="Clusterin alpha chain" evidence="41 46">
    <location>
        <begin position="228"/>
        <end position="449"/>
    </location>
</feature>
<feature type="short sequence motif" description="Nuclear localization signal" evidence="3">
    <location>
        <begin position="78"/>
        <end position="81"/>
    </location>
</feature>
<feature type="short sequence motif" description="Nuclear localization signal" evidence="3">
    <location>
        <begin position="443"/>
        <end position="447"/>
    </location>
</feature>
<feature type="site" description="Cleavage" evidence="44">
    <location>
        <begin position="227"/>
        <end position="228"/>
    </location>
</feature>
<feature type="modified residue" description="Phosphoserine" evidence="72">
    <location>
        <position position="133"/>
    </location>
</feature>
<feature type="modified residue" description="Phosphoserine" evidence="72">
    <location>
        <position position="396"/>
    </location>
</feature>
<feature type="glycosylation site" description="N-linked (GlcNAc...) (complex) asparagine" evidence="13 16 31 32 55">
    <location>
        <position position="86"/>
    </location>
</feature>
<feature type="glycosylation site" description="N-linked (GlcNAc...) asparagine" evidence="13 16 32 46 55">
    <location>
        <position position="103"/>
    </location>
</feature>
<feature type="glycosylation site" description="N-linked (GlcNAc...) asparagine" evidence="13 16 32 46 55">
    <location>
        <position position="145"/>
    </location>
</feature>
<feature type="glycosylation site" description="N-linked (GlcNAc...) asparagine" evidence="13 16 28 46 55">
    <location>
        <position position="291"/>
    </location>
</feature>
<feature type="glycosylation site" description="N-linked (GlcNAc...) asparagine" evidence="8 10 13 16 32 55">
    <location>
        <position position="354"/>
    </location>
</feature>
<feature type="glycosylation site" description="N-linked (GlcNAc...) (complex) asparagine" evidence="10 13 15 16 18 28 31 32 35 55">
    <location>
        <position position="374"/>
    </location>
</feature>
<feature type="disulfide bond" description="Interchain (between beta and alpha chains)">
    <location>
        <begin position="102"/>
        <end position="313"/>
    </location>
</feature>
<feature type="disulfide bond" description="Interchain (between beta and alpha chains)">
    <location>
        <begin position="113"/>
        <end position="305"/>
    </location>
</feature>
<feature type="disulfide bond" description="Interchain (between beta and alpha chains)">
    <location>
        <begin position="116"/>
        <end position="302"/>
    </location>
</feature>
<feature type="disulfide bond" description="Interchain (between beta and alpha chains)">
    <location>
        <begin position="121"/>
        <end position="295"/>
    </location>
</feature>
<feature type="disulfide bond" description="Interchain (between beta and alpha chains)">
    <location>
        <begin position="129"/>
        <end position="285"/>
    </location>
</feature>
<feature type="splice variant" id="VSP_041475" description="In isoform 3." evidence="58">
    <location>
        <begin position="1"/>
        <end position="175"/>
    </location>
</feature>
<feature type="splice variant" id="VSP_041476" description="In isoform 4." evidence="70">
    <location>
        <begin position="1"/>
        <end position="33"/>
    </location>
</feature>
<feature type="splice variant" id="VSP_060188" description="In isoform 6.">
    <location>
        <begin position="1"/>
        <end position="20"/>
    </location>
</feature>
<feature type="splice variant" id="VSP_037661" description="In isoform 2." evidence="60 66 69">
    <original>M</original>
    <variation>MQVCSQPQRGCVREQSAINTAPPSAHNAASPGGARGHRVPLTEACKDSRIGGM</variation>
    <location>
        <position position="1"/>
    </location>
</feature>
<feature type="splice variant" id="VSP_041477" description="In isoform 5." evidence="59">
    <original>M</original>
    <variation>MEACKDSRIGGM</variation>
    <location>
        <position position="1"/>
    </location>
</feature>
<feature type="splice variant" id="VSP_060192" description="In isoform 6.">
    <original>L</original>
    <variation>M</variation>
    <location>
        <position position="21"/>
    </location>
</feature>
<feature type="sequence variant" id="VAR_019366" description="In dbSNP:rs9331936." evidence="56">
    <original>N</original>
    <variation>H</variation>
    <location>
        <position position="317"/>
    </location>
</feature>
<feature type="sequence variant" id="VAR_019367" description="In dbSNP:rs9331938." evidence="56">
    <original>D</original>
    <variation>N</variation>
    <location>
        <position position="328"/>
    </location>
</feature>
<feature type="sequence variant" id="VAR_019368" description="In dbSNP:rs13494." evidence="56">
    <original>S</original>
    <variation>L</variation>
    <location>
        <position position="396"/>
    </location>
</feature>
<feature type="mutagenesis site" description="Decreases molecular mass of beta chain; when associated with Q-103 and Q-145." evidence="40">
    <original>N</original>
    <variation>Q</variation>
    <location>
        <position position="86"/>
    </location>
</feature>
<feature type="mutagenesis site" description="Decreases molecular mass of beta chain; when associated with Q-86 and Q-145." evidence="40">
    <original>N</original>
    <variation>Q</variation>
    <location>
        <position position="103"/>
    </location>
</feature>
<feature type="mutagenesis site" description="Decreases molecular mass of beta chain; when associated with Q-86 and Q-103." evidence="40">
    <original>N</original>
    <variation>Q</variation>
    <location>
        <position position="145"/>
    </location>
</feature>
<feature type="mutagenesis site" description="Does not affect proteolytic cleavage." evidence="44">
    <original>V</original>
    <variation>T</variation>
    <location>
        <position position="226"/>
    </location>
</feature>
<feature type="mutagenesis site" description="Affects proteolytic cleavage." evidence="44">
    <original>R</original>
    <variation>Q</variation>
    <location>
        <position position="227"/>
    </location>
</feature>
<feature type="mutagenesis site" description="Decreases molecular mass of alpha chain; when associated with Q-354 and Q-374. Decreases secretion; when associated with Q-354 and Q-374." evidence="40">
    <original>N</original>
    <variation>Q</variation>
    <location>
        <position position="291"/>
    </location>
</feature>
<feature type="mutagenesis site" description="Decreases molecular mass of alpha chain; when associated with Q-291 and Q-374. Decreases secretion; when associated with Q-291 and Q-374." evidence="40">
    <original>N</original>
    <variation>Q</variation>
    <location>
        <position position="354"/>
    </location>
</feature>
<feature type="mutagenesis site" description="Decreases molecular mass of alpha chain; when associated with Q-291 and Q-354. Decreases secretion; when associated with Q-291 and Q-354." evidence="40">
    <original>N</original>
    <variation>Q</variation>
    <location>
        <position position="374"/>
    </location>
</feature>
<feature type="sequence conflict" description="In Ref. 10; AA sequence and 14; AA sequence." evidence="70" ref="10 14">
    <original>D</original>
    <variation>S</variation>
    <location>
        <position position="28"/>
    </location>
</feature>
<feature type="sequence conflict" description="In Ref. 11; AA sequence." evidence="70" ref="11">
    <original>Q</original>
    <variation>H</variation>
    <location>
        <position position="47"/>
    </location>
</feature>
<feature type="sequence conflict" description="In Ref. 11; AA sequence." evidence="70" ref="11">
    <original>G</original>
    <variation>Q</variation>
    <location>
        <position position="52"/>
    </location>
</feature>
<feature type="sequence conflict" description="In Ref. 6; CAI45990." evidence="70" ref="6">
    <original>M</original>
    <variation>V</variation>
    <location>
        <position position="172"/>
    </location>
</feature>
<feature type="sequence conflict" description="In Ref. 4; BAG36598." evidence="70" ref="4">
    <original>R</original>
    <variation>L</variation>
    <location>
        <position position="224"/>
    </location>
</feature>
<feature type="sequence conflict" description="In Ref. 10; AA sequence." evidence="70" ref="10">
    <original>C</original>
    <variation>M</variation>
    <location>
        <position position="305"/>
    </location>
</feature>
<feature type="sequence conflict" description="In Ref. 6; CAI45990." evidence="70" ref="6">
    <original>T</original>
    <variation>M</variation>
    <location>
        <position position="388"/>
    </location>
</feature>
<feature type="sequence conflict" description="In Ref. 4; BAG36598." evidence="70" ref="4">
    <original>D</original>
    <variation>G</variation>
    <location>
        <position position="411"/>
    </location>
</feature>
<feature type="helix" evidence="73">
    <location>
        <begin position="28"/>
        <end position="39"/>
    </location>
</feature>
<feature type="helix" evidence="73">
    <location>
        <begin position="42"/>
        <end position="96"/>
    </location>
</feature>
<feature type="helix" evidence="73">
    <location>
        <begin position="105"/>
        <end position="127"/>
    </location>
</feature>
<feature type="helix" evidence="73">
    <location>
        <begin position="133"/>
        <end position="145"/>
    </location>
</feature>
<feature type="helix" evidence="73">
    <location>
        <begin position="149"/>
        <end position="153"/>
    </location>
</feature>
<feature type="helix" evidence="73">
    <location>
        <begin position="156"/>
        <end position="190"/>
    </location>
</feature>
<feature type="helix" evidence="73">
    <location>
        <begin position="194"/>
        <end position="196"/>
    </location>
</feature>
<feature type="helix" evidence="73">
    <location>
        <begin position="200"/>
        <end position="203"/>
    </location>
</feature>
<feature type="strand" evidence="73">
    <location>
        <begin position="205"/>
        <end position="207"/>
    </location>
</feature>
<feature type="helix" evidence="73">
    <location>
        <begin position="241"/>
        <end position="258"/>
    </location>
</feature>
<feature type="helix" evidence="73">
    <location>
        <begin position="282"/>
        <end position="290"/>
    </location>
</feature>
<feature type="helix" evidence="73">
    <location>
        <begin position="292"/>
        <end position="298"/>
    </location>
</feature>
<feature type="turn" evidence="73">
    <location>
        <begin position="299"/>
        <end position="301"/>
    </location>
</feature>
<feature type="helix" evidence="73">
    <location>
        <begin position="303"/>
        <end position="308"/>
    </location>
</feature>
<feature type="turn" evidence="73">
    <location>
        <begin position="314"/>
        <end position="316"/>
    </location>
</feature>
<feature type="helix" evidence="73">
    <location>
        <begin position="318"/>
        <end position="376"/>
    </location>
</feature>
<feature type="strand" evidence="73">
    <location>
        <begin position="383"/>
        <end position="391"/>
    </location>
</feature>
<feature type="turn" evidence="73">
    <location>
        <begin position="392"/>
        <end position="395"/>
    </location>
</feature>
<feature type="strand" evidence="73">
    <location>
        <begin position="396"/>
        <end position="398"/>
    </location>
</feature>
<feature type="strand" evidence="73">
    <location>
        <begin position="402"/>
        <end position="409"/>
    </location>
</feature>
<feature type="strand" evidence="73">
    <location>
        <begin position="415"/>
        <end position="420"/>
    </location>
</feature>
<feature type="helix" evidence="73">
    <location>
        <begin position="421"/>
        <end position="424"/>
    </location>
</feature>
<feature type="helix" evidence="73">
    <location>
        <begin position="430"/>
        <end position="445"/>
    </location>
</feature>
<organism>
    <name type="scientific">Homo sapiens</name>
    <name type="common">Human</name>
    <dbReference type="NCBI Taxonomy" id="9606"/>
    <lineage>
        <taxon>Eukaryota</taxon>
        <taxon>Metazoa</taxon>
        <taxon>Chordata</taxon>
        <taxon>Craniata</taxon>
        <taxon>Vertebrata</taxon>
        <taxon>Euteleostomi</taxon>
        <taxon>Mammalia</taxon>
        <taxon>Eutheria</taxon>
        <taxon>Euarchontoglires</taxon>
        <taxon>Primates</taxon>
        <taxon>Haplorrhini</taxon>
        <taxon>Catarrhini</taxon>
        <taxon>Hominidae</taxon>
        <taxon>Homo</taxon>
    </lineage>
</organism>
<dbReference type="EMBL" id="M25915">
    <property type="protein sequence ID" value="AAA35692.1"/>
    <property type="status" value="ALT_INIT"/>
    <property type="molecule type" value="mRNA"/>
</dbReference>
<dbReference type="EMBL" id="M63379">
    <property type="protein sequence ID" value="AAB06507.1"/>
    <property type="molecule type" value="Genomic_DNA"/>
</dbReference>
<dbReference type="EMBL" id="M63376">
    <property type="protein sequence ID" value="AAB06507.1"/>
    <property type="status" value="JOINED"/>
    <property type="molecule type" value="Genomic_DNA"/>
</dbReference>
<dbReference type="EMBL" id="M63377">
    <property type="protein sequence ID" value="AAB06507.1"/>
    <property type="status" value="JOINED"/>
    <property type="molecule type" value="Genomic_DNA"/>
</dbReference>
<dbReference type="EMBL" id="M63378">
    <property type="protein sequence ID" value="AAB06507.1"/>
    <property type="status" value="JOINED"/>
    <property type="molecule type" value="Genomic_DNA"/>
</dbReference>
<dbReference type="EMBL" id="M64722">
    <property type="protein sequence ID" value="AAB06508.1"/>
    <property type="status" value="ALT_SEQ"/>
    <property type="molecule type" value="mRNA"/>
</dbReference>
<dbReference type="EMBL" id="AK093399">
    <property type="protein sequence ID" value="BAG52708.1"/>
    <property type="molecule type" value="mRNA"/>
</dbReference>
<dbReference type="EMBL" id="AK313870">
    <property type="protein sequence ID" value="BAG36598.1"/>
    <property type="status" value="ALT_INIT"/>
    <property type="molecule type" value="mRNA"/>
</dbReference>
<dbReference type="EMBL" id="CR599675">
    <property type="status" value="NOT_ANNOTATED_CDS"/>
    <property type="molecule type" value="mRNA"/>
</dbReference>
<dbReference type="EMBL" id="BX648414">
    <property type="protein sequence ID" value="CAI45990.1"/>
    <property type="molecule type" value="mRNA"/>
</dbReference>
<dbReference type="EMBL" id="AY341244">
    <property type="protein sequence ID" value="AAP88927.1"/>
    <property type="status" value="ALT_INIT"/>
    <property type="molecule type" value="Genomic_DNA"/>
</dbReference>
<dbReference type="EMBL" id="AF311103">
    <property type="status" value="NOT_ANNOTATED_CDS"/>
    <property type="molecule type" value="Genomic_DNA"/>
</dbReference>
<dbReference type="EMBL" id="BC010514">
    <property type="protein sequence ID" value="AAH10514.1"/>
    <property type="status" value="ALT_INIT"/>
    <property type="molecule type" value="mRNA"/>
</dbReference>
<dbReference type="EMBL" id="BC019588">
    <property type="protein sequence ID" value="AAH19588.1"/>
    <property type="status" value="ALT_INIT"/>
    <property type="molecule type" value="mRNA"/>
</dbReference>
<dbReference type="EMBL" id="BU150467">
    <property type="status" value="NOT_ANNOTATED_CDS"/>
    <property type="molecule type" value="mRNA"/>
</dbReference>
<dbReference type="EMBL" id="J02908">
    <property type="protein sequence ID" value="AAA51765.1"/>
    <property type="molecule type" value="mRNA"/>
</dbReference>
<dbReference type="EMBL" id="M74816">
    <property type="protein sequence ID" value="AAA60321.1"/>
    <property type="molecule type" value="mRNA"/>
</dbReference>
<dbReference type="EMBL" id="L00974">
    <property type="protein sequence ID" value="AAA60567.1"/>
    <property type="molecule type" value="Genomic_DNA"/>
</dbReference>
<dbReference type="EMBL" id="X14723">
    <property type="protein sequence ID" value="CAA32847.1"/>
    <property type="status" value="ALT_INIT"/>
    <property type="molecule type" value="mRNA"/>
</dbReference>
<dbReference type="EMBL" id="AY513288">
    <property type="protein sequence ID" value="AAT08041.1"/>
    <property type="status" value="ALT_INIT"/>
    <property type="molecule type" value="mRNA"/>
</dbReference>
<dbReference type="CCDS" id="CCDS47832.1">
    <molecule id="P10909-1"/>
</dbReference>
<dbReference type="PIR" id="S43646">
    <property type="entry name" value="A41386"/>
</dbReference>
<dbReference type="RefSeq" id="NP_001822.3">
    <molecule id="P10909-1"/>
    <property type="nucleotide sequence ID" value="NM_001831.3"/>
</dbReference>
<dbReference type="PDB" id="7ZET">
    <property type="method" value="X-ray"/>
    <property type="resolution" value="2.80 A"/>
    <property type="chains" value="A=23-449"/>
</dbReference>
<dbReference type="PDB" id="7ZEU">
    <property type="method" value="X-ray"/>
    <property type="resolution" value="3.50 A"/>
    <property type="chains" value="A/D=23-449"/>
</dbReference>
<dbReference type="PDBsum" id="7ZET"/>
<dbReference type="PDBsum" id="7ZEU"/>
<dbReference type="SMR" id="P10909"/>
<dbReference type="BioGRID" id="107603">
    <property type="interactions" value="290"/>
</dbReference>
<dbReference type="CORUM" id="P10909"/>
<dbReference type="DIP" id="DIP-37546N"/>
<dbReference type="FunCoup" id="P10909">
    <property type="interactions" value="1070"/>
</dbReference>
<dbReference type="IntAct" id="P10909">
    <property type="interactions" value="198"/>
</dbReference>
<dbReference type="MINT" id="P10909"/>
<dbReference type="STRING" id="9606.ENSP00000315130"/>
<dbReference type="DrugBank" id="DB09130">
    <property type="generic name" value="Copper"/>
</dbReference>
<dbReference type="DrugBank" id="DB05487">
    <property type="generic name" value="Custirsen"/>
</dbReference>
<dbReference type="DrugBank" id="DB01593">
    <property type="generic name" value="Zinc"/>
</dbReference>
<dbReference type="DrugBank" id="DB14487">
    <property type="generic name" value="Zinc acetate"/>
</dbReference>
<dbReference type="DrugBank" id="DB14533">
    <property type="generic name" value="Zinc chloride"/>
</dbReference>
<dbReference type="DrugBank" id="DB14548">
    <property type="generic name" value="Zinc sulfate, unspecified form"/>
</dbReference>
<dbReference type="GuidetoPHARMACOLOGY" id="3195"/>
<dbReference type="CarbonylDB" id="P10909"/>
<dbReference type="GlyConnect" id="759">
    <property type="glycosylation" value="142 N-Linked glycans (6 sites)"/>
</dbReference>
<dbReference type="GlyCosmos" id="P10909">
    <property type="glycosylation" value="7 sites, 157 glycans"/>
</dbReference>
<dbReference type="GlyGen" id="P10909">
    <property type="glycosylation" value="12 sites, 289 N-linked glycans (6 sites), 3 O-linked glycans (4 sites)"/>
</dbReference>
<dbReference type="iPTMnet" id="P10909"/>
<dbReference type="PhosphoSitePlus" id="P10909"/>
<dbReference type="SwissPalm" id="P10909"/>
<dbReference type="BioMuta" id="CLU"/>
<dbReference type="DMDM" id="116533"/>
<dbReference type="OGP" id="P10909"/>
<dbReference type="REPRODUCTION-2DPAGE" id="IPI00291262"/>
<dbReference type="CPTAC" id="CPTAC-478"/>
<dbReference type="CPTAC" id="CPTAC-479"/>
<dbReference type="CPTAC" id="CPTAC-661"/>
<dbReference type="CPTAC" id="CPTAC-662"/>
<dbReference type="CPTAC" id="CPTAC-728"/>
<dbReference type="CPTAC" id="non-CPTAC-1096"/>
<dbReference type="CPTAC" id="non-CPTAC-1097"/>
<dbReference type="CPTAC" id="non-CPTAC-1098"/>
<dbReference type="jPOST" id="P10909"/>
<dbReference type="MassIVE" id="P10909"/>
<dbReference type="PaxDb" id="9606-ENSP00000315130"/>
<dbReference type="PeptideAtlas" id="P10909"/>
<dbReference type="PRIDE" id="P10909"/>
<dbReference type="ProteomicsDB" id="52663">
    <molecule id="P10909-1"/>
</dbReference>
<dbReference type="ProteomicsDB" id="52664">
    <molecule id="P10909-2"/>
</dbReference>
<dbReference type="ProteomicsDB" id="52665">
    <molecule id="P10909-3"/>
</dbReference>
<dbReference type="ProteomicsDB" id="52666">
    <molecule id="P10909-4"/>
</dbReference>
<dbReference type="ProteomicsDB" id="52667">
    <molecule id="P10909-5"/>
</dbReference>
<dbReference type="Pumba" id="P10909"/>
<dbReference type="ABCD" id="P10909">
    <property type="antibodies" value="1 sequenced antibody"/>
</dbReference>
<dbReference type="Antibodypedia" id="631">
    <property type="antibodies" value="1353 antibodies from 51 providers"/>
</dbReference>
<dbReference type="CPTC" id="P10909">
    <property type="antibodies" value="1 antibody"/>
</dbReference>
<dbReference type="DNASU" id="1191"/>
<dbReference type="Ensembl" id="ENST00000316403.15">
    <molecule id="P10909-1"/>
    <property type="protein sequence ID" value="ENSP00000315130.10"/>
    <property type="gene ID" value="ENSG00000120885.22"/>
</dbReference>
<dbReference type="Ensembl" id="ENST00000405140.7">
    <molecule id="P10909-1"/>
    <property type="protein sequence ID" value="ENSP00000385419.3"/>
    <property type="gene ID" value="ENSG00000120885.22"/>
</dbReference>
<dbReference type="Ensembl" id="ENST00000523500.5">
    <molecule id="P10909-1"/>
    <property type="protein sequence ID" value="ENSP00000429620.1"/>
    <property type="gene ID" value="ENSG00000120885.22"/>
</dbReference>
<dbReference type="GeneID" id="1191"/>
<dbReference type="KEGG" id="hsa:1191"/>
<dbReference type="MANE-Select" id="ENST00000316403.15">
    <property type="protein sequence ID" value="ENSP00000315130.10"/>
    <property type="RefSeq nucleotide sequence ID" value="NM_001831.4"/>
    <property type="RefSeq protein sequence ID" value="NP_001822.3"/>
</dbReference>
<dbReference type="UCSC" id="uc003xfw.3">
    <molecule id="P10909-1"/>
    <property type="organism name" value="human"/>
</dbReference>
<dbReference type="AGR" id="HGNC:2095"/>
<dbReference type="CTD" id="1191"/>
<dbReference type="DisGeNET" id="1191"/>
<dbReference type="GeneCards" id="CLU"/>
<dbReference type="HGNC" id="HGNC:2095">
    <property type="gene designation" value="CLU"/>
</dbReference>
<dbReference type="HPA" id="ENSG00000120885">
    <property type="expression patterns" value="Tissue enhanced (liver)"/>
</dbReference>
<dbReference type="MalaCards" id="CLU"/>
<dbReference type="MIM" id="185430">
    <property type="type" value="gene"/>
</dbReference>
<dbReference type="neXtProt" id="NX_P10909"/>
<dbReference type="NIAGADS" id="ENSG00000120885"/>
<dbReference type="OpenTargets" id="ENSG00000120885"/>
<dbReference type="PharmGKB" id="PA26620"/>
<dbReference type="VEuPathDB" id="HostDB:ENSG00000120885"/>
<dbReference type="eggNOG" id="ENOG502RBQP">
    <property type="taxonomic scope" value="Eukaryota"/>
</dbReference>
<dbReference type="GeneTree" id="ENSGT00530000063668"/>
<dbReference type="HOGENOM" id="CLU_042162_2_0_1"/>
<dbReference type="InParanoid" id="P10909"/>
<dbReference type="OMA" id="QGSKYIN"/>
<dbReference type="OrthoDB" id="9018825at2759"/>
<dbReference type="PAN-GO" id="P10909">
    <property type="GO annotations" value="5 GO annotations based on evolutionary models"/>
</dbReference>
<dbReference type="PhylomeDB" id="P10909"/>
<dbReference type="TreeFam" id="TF333030"/>
<dbReference type="PathwayCommons" id="P10909"/>
<dbReference type="Reactome" id="R-HSA-114608">
    <property type="pathway name" value="Platelet degranulation"/>
</dbReference>
<dbReference type="Reactome" id="R-HSA-166665">
    <property type="pathway name" value="Terminal pathway of complement"/>
</dbReference>
<dbReference type="Reactome" id="R-HSA-6803157">
    <property type="pathway name" value="Antimicrobial peptides"/>
</dbReference>
<dbReference type="Reactome" id="R-HSA-977606">
    <property type="pathway name" value="Regulation of Complement cascade"/>
</dbReference>
<dbReference type="SignaLink" id="P10909"/>
<dbReference type="SIGNOR" id="P10909"/>
<dbReference type="BioGRID-ORCS" id="1191">
    <property type="hits" value="13 hits in 1159 CRISPR screens"/>
</dbReference>
<dbReference type="CD-CODE" id="FB4E32DD">
    <property type="entry name" value="Presynaptic clusters and postsynaptic densities"/>
</dbReference>
<dbReference type="ChiTaRS" id="CLU">
    <property type="organism name" value="human"/>
</dbReference>
<dbReference type="GeneWiki" id="Clusterin"/>
<dbReference type="GenomeRNAi" id="1191"/>
<dbReference type="Pharos" id="P10909">
    <property type="development level" value="Tbio"/>
</dbReference>
<dbReference type="PRO" id="PR:P10909"/>
<dbReference type="Proteomes" id="UP000005640">
    <property type="component" value="Chromosome 8"/>
</dbReference>
<dbReference type="RNAct" id="P10909">
    <property type="molecule type" value="protein"/>
</dbReference>
<dbReference type="Bgee" id="ENSG00000120885">
    <property type="expression patterns" value="Expressed in lateral globus pallidus and 209 other cell types or tissues"/>
</dbReference>
<dbReference type="ExpressionAtlas" id="P10909">
    <property type="expression patterns" value="baseline and differential"/>
</dbReference>
<dbReference type="GO" id="GO:0097440">
    <property type="term" value="C:apical dendrite"/>
    <property type="evidence" value="ECO:0000314"/>
    <property type="project" value="Alzheimers_University_of_Toronto"/>
</dbReference>
<dbReference type="GO" id="GO:0072562">
    <property type="term" value="C:blood microparticle"/>
    <property type="evidence" value="ECO:0007005"/>
    <property type="project" value="UniProtKB"/>
</dbReference>
<dbReference type="GO" id="GO:0009986">
    <property type="term" value="C:cell surface"/>
    <property type="evidence" value="ECO:0000314"/>
    <property type="project" value="UniProtKB"/>
</dbReference>
<dbReference type="GO" id="GO:0042583">
    <property type="term" value="C:chromaffin granule"/>
    <property type="evidence" value="ECO:0007669"/>
    <property type="project" value="UniProtKB-SubCell"/>
</dbReference>
<dbReference type="GO" id="GO:0062023">
    <property type="term" value="C:collagen-containing extracellular matrix"/>
    <property type="evidence" value="ECO:0007005"/>
    <property type="project" value="UniProtKB"/>
</dbReference>
<dbReference type="GO" id="GO:0005737">
    <property type="term" value="C:cytoplasm"/>
    <property type="evidence" value="ECO:0000314"/>
    <property type="project" value="UniProtKB"/>
</dbReference>
<dbReference type="GO" id="GO:0005829">
    <property type="term" value="C:cytosol"/>
    <property type="evidence" value="ECO:0000314"/>
    <property type="project" value="HPA"/>
</dbReference>
<dbReference type="GO" id="GO:0070062">
    <property type="term" value="C:extracellular exosome"/>
    <property type="evidence" value="ECO:0007005"/>
    <property type="project" value="UniProtKB"/>
</dbReference>
<dbReference type="GO" id="GO:0005576">
    <property type="term" value="C:extracellular region"/>
    <property type="evidence" value="ECO:0007005"/>
    <property type="project" value="BHF-UCL"/>
</dbReference>
<dbReference type="GO" id="GO:0005615">
    <property type="term" value="C:extracellular space"/>
    <property type="evidence" value="ECO:0000314"/>
    <property type="project" value="UniProtKB"/>
</dbReference>
<dbReference type="GO" id="GO:0005794">
    <property type="term" value="C:Golgi apparatus"/>
    <property type="evidence" value="ECO:0000250"/>
    <property type="project" value="ParkinsonsUK-UCL"/>
</dbReference>
<dbReference type="GO" id="GO:0043231">
    <property type="term" value="C:intracellular membrane-bounded organelle"/>
    <property type="evidence" value="ECO:0000314"/>
    <property type="project" value="UniProtKB"/>
</dbReference>
<dbReference type="GO" id="GO:0005743">
    <property type="term" value="C:mitochondrial inner membrane"/>
    <property type="evidence" value="ECO:0000314"/>
    <property type="project" value="UniProtKB"/>
</dbReference>
<dbReference type="GO" id="GO:0005739">
    <property type="term" value="C:mitochondrion"/>
    <property type="evidence" value="ECO:0000314"/>
    <property type="project" value="UniProtKB"/>
</dbReference>
<dbReference type="GO" id="GO:0097418">
    <property type="term" value="C:neurofibrillary tangle"/>
    <property type="evidence" value="ECO:0000314"/>
    <property type="project" value="Alzheimers_University_of_Toronto"/>
</dbReference>
<dbReference type="GO" id="GO:0005634">
    <property type="term" value="C:nucleus"/>
    <property type="evidence" value="ECO:0000314"/>
    <property type="project" value="UniProtKB"/>
</dbReference>
<dbReference type="GO" id="GO:0099020">
    <property type="term" value="C:perinuclear endoplasmic reticulum lumen"/>
    <property type="evidence" value="ECO:0000314"/>
    <property type="project" value="UniProtKB"/>
</dbReference>
<dbReference type="GO" id="GO:0048471">
    <property type="term" value="C:perinuclear region of cytoplasm"/>
    <property type="evidence" value="ECO:0000314"/>
    <property type="project" value="UniProtKB"/>
</dbReference>
<dbReference type="GO" id="GO:0031093">
    <property type="term" value="C:platelet alpha granule lumen"/>
    <property type="evidence" value="ECO:0000304"/>
    <property type="project" value="Reactome"/>
</dbReference>
<dbReference type="GO" id="GO:0032991">
    <property type="term" value="C:protein-containing complex"/>
    <property type="evidence" value="ECO:0000314"/>
    <property type="project" value="UniProtKB"/>
</dbReference>
<dbReference type="GO" id="GO:0034366">
    <property type="term" value="C:spherical high-density lipoprotein particle"/>
    <property type="evidence" value="ECO:0000314"/>
    <property type="project" value="BHF-UCL"/>
</dbReference>
<dbReference type="GO" id="GO:0045202">
    <property type="term" value="C:synapse"/>
    <property type="evidence" value="ECO:0007669"/>
    <property type="project" value="Ensembl"/>
</dbReference>
<dbReference type="GO" id="GO:0001540">
    <property type="term" value="F:amyloid-beta binding"/>
    <property type="evidence" value="ECO:0000314"/>
    <property type="project" value="ARUK-UCL"/>
</dbReference>
<dbReference type="GO" id="GO:0050750">
    <property type="term" value="F:low-density lipoprotein particle receptor binding"/>
    <property type="evidence" value="ECO:0000353"/>
    <property type="project" value="ARUK-UCL"/>
</dbReference>
<dbReference type="GO" id="GO:0051787">
    <property type="term" value="F:misfolded protein binding"/>
    <property type="evidence" value="ECO:0000314"/>
    <property type="project" value="UniProtKB"/>
</dbReference>
<dbReference type="GO" id="GO:0140597">
    <property type="term" value="F:protein carrier chaperone"/>
    <property type="evidence" value="ECO:0000314"/>
    <property type="project" value="ARUK-UCL"/>
</dbReference>
<dbReference type="GO" id="GO:0044877">
    <property type="term" value="F:protein-containing complex binding"/>
    <property type="evidence" value="ECO:0000353"/>
    <property type="project" value="ARUK-UCL"/>
</dbReference>
<dbReference type="GO" id="GO:0051087">
    <property type="term" value="F:protein-folding chaperone binding"/>
    <property type="evidence" value="ECO:0000250"/>
    <property type="project" value="ParkinsonsUK-UCL"/>
</dbReference>
<dbReference type="GO" id="GO:0048018">
    <property type="term" value="F:receptor ligand activity"/>
    <property type="evidence" value="ECO:0000314"/>
    <property type="project" value="UniProt"/>
</dbReference>
<dbReference type="GO" id="GO:0005102">
    <property type="term" value="F:signaling receptor binding"/>
    <property type="evidence" value="ECO:0000353"/>
    <property type="project" value="ARUK-UCL"/>
</dbReference>
<dbReference type="GO" id="GO:0048156">
    <property type="term" value="F:tau protein binding"/>
    <property type="evidence" value="ECO:0000353"/>
    <property type="project" value="ARUK-UCL"/>
</dbReference>
<dbReference type="GO" id="GO:0031625">
    <property type="term" value="F:ubiquitin protein ligase binding"/>
    <property type="evidence" value="ECO:0000314"/>
    <property type="project" value="UniProtKB"/>
</dbReference>
<dbReference type="GO" id="GO:0051082">
    <property type="term" value="F:unfolded protein binding"/>
    <property type="evidence" value="ECO:0000315"/>
    <property type="project" value="UniProtKB"/>
</dbReference>
<dbReference type="GO" id="GO:0097242">
    <property type="term" value="P:amyloid-beta clearance"/>
    <property type="evidence" value="ECO:0000314"/>
    <property type="project" value="UniProt"/>
</dbReference>
<dbReference type="GO" id="GO:0000902">
    <property type="term" value="P:cell morphogenesis"/>
    <property type="evidence" value="ECO:0000314"/>
    <property type="project" value="Alzheimers_University_of_Toronto"/>
</dbReference>
<dbReference type="GO" id="GO:0032286">
    <property type="term" value="P:central nervous system myelin maintenance"/>
    <property type="evidence" value="ECO:0000315"/>
    <property type="project" value="Alzheimers_University_of_Toronto"/>
</dbReference>
<dbReference type="GO" id="GO:0051131">
    <property type="term" value="P:chaperone-mediated protein complex assembly"/>
    <property type="evidence" value="ECO:0000314"/>
    <property type="project" value="Alzheimers_University_of_Toronto"/>
</dbReference>
<dbReference type="GO" id="GO:0061077">
    <property type="term" value="P:chaperone-mediated protein folding"/>
    <property type="evidence" value="ECO:0000314"/>
    <property type="project" value="UniProtKB"/>
</dbReference>
<dbReference type="GO" id="GO:0006956">
    <property type="term" value="P:complement activation"/>
    <property type="evidence" value="ECO:0000304"/>
    <property type="project" value="ProtInc"/>
</dbReference>
<dbReference type="GO" id="GO:0006958">
    <property type="term" value="P:complement activation, classical pathway"/>
    <property type="evidence" value="ECO:0007669"/>
    <property type="project" value="UniProtKB-KW"/>
</dbReference>
<dbReference type="GO" id="GO:0002434">
    <property type="term" value="P:immune complex clearance"/>
    <property type="evidence" value="ECO:0000250"/>
    <property type="project" value="UniProtKB"/>
</dbReference>
<dbReference type="GO" id="GO:0045087">
    <property type="term" value="P:innate immune response"/>
    <property type="evidence" value="ECO:0007669"/>
    <property type="project" value="UniProtKB-KW"/>
</dbReference>
<dbReference type="GO" id="GO:0097193">
    <property type="term" value="P:intrinsic apoptotic signaling pathway"/>
    <property type="evidence" value="ECO:0000314"/>
    <property type="project" value="UniProtKB"/>
</dbReference>
<dbReference type="GO" id="GO:0006629">
    <property type="term" value="P:lipid metabolic process"/>
    <property type="evidence" value="ECO:0000303"/>
    <property type="project" value="ProtInc"/>
</dbReference>
<dbReference type="GO" id="GO:0001774">
    <property type="term" value="P:microglial cell activation"/>
    <property type="evidence" value="ECO:0000314"/>
    <property type="project" value="Alzheimers_University_of_Toronto"/>
</dbReference>
<dbReference type="GO" id="GO:0061518">
    <property type="term" value="P:microglial cell proliferation"/>
    <property type="evidence" value="ECO:0000314"/>
    <property type="project" value="Alzheimers_University_of_Toronto"/>
</dbReference>
<dbReference type="GO" id="GO:1905907">
    <property type="term" value="P:negative regulation of amyloid fibril formation"/>
    <property type="evidence" value="ECO:0000314"/>
    <property type="project" value="ARUK-UCL"/>
</dbReference>
<dbReference type="GO" id="GO:1902430">
    <property type="term" value="P:negative regulation of amyloid-beta formation"/>
    <property type="evidence" value="ECO:0000314"/>
    <property type="project" value="Alzheimers_University_of_Toronto"/>
</dbReference>
<dbReference type="GO" id="GO:1902230">
    <property type="term" value="P:negative regulation of intrinsic apoptotic signaling pathway in response to DNA damage"/>
    <property type="evidence" value="ECO:0000315"/>
    <property type="project" value="BHF-UCL"/>
</dbReference>
<dbReference type="GO" id="GO:0043524">
    <property type="term" value="P:negative regulation of neuron apoptotic process"/>
    <property type="evidence" value="ECO:0000250"/>
    <property type="project" value="ARUK-UCL"/>
</dbReference>
<dbReference type="GO" id="GO:0031333">
    <property type="term" value="P:negative regulation of protein-containing complex assembly"/>
    <property type="evidence" value="ECO:0000314"/>
    <property type="project" value="ARUK-UCL"/>
</dbReference>
<dbReference type="GO" id="GO:0090201">
    <property type="term" value="P:negative regulation of release of cytochrome c from mitochondria"/>
    <property type="evidence" value="ECO:0000304"/>
    <property type="project" value="ARUK-UCL"/>
</dbReference>
<dbReference type="GO" id="GO:1903573">
    <property type="term" value="P:negative regulation of response to endoplasmic reticulum stress"/>
    <property type="evidence" value="ECO:0000315"/>
    <property type="project" value="ARUK-UCL"/>
</dbReference>
<dbReference type="GO" id="GO:1905908">
    <property type="term" value="P:positive regulation of amyloid fibril formation"/>
    <property type="evidence" value="ECO:0000304"/>
    <property type="project" value="ARUK-UCL"/>
</dbReference>
<dbReference type="GO" id="GO:1902004">
    <property type="term" value="P:positive regulation of amyloid-beta formation"/>
    <property type="evidence" value="ECO:0000250"/>
    <property type="project" value="Alzheimers_University_of_Toronto"/>
</dbReference>
<dbReference type="GO" id="GO:0043065">
    <property type="term" value="P:positive regulation of apoptotic process"/>
    <property type="evidence" value="ECO:0000315"/>
    <property type="project" value="UniProtKB"/>
</dbReference>
<dbReference type="GO" id="GO:0010628">
    <property type="term" value="P:positive regulation of gene expression"/>
    <property type="evidence" value="ECO:0000250"/>
    <property type="project" value="ARUK-UCL"/>
</dbReference>
<dbReference type="GO" id="GO:2001244">
    <property type="term" value="P:positive regulation of intrinsic apoptotic signaling pathway"/>
    <property type="evidence" value="ECO:0000315"/>
    <property type="project" value="UniProtKB"/>
</dbReference>
<dbReference type="GO" id="GO:1902998">
    <property type="term" value="P:positive regulation of neurofibrillary tangle assembly"/>
    <property type="evidence" value="ECO:0000315"/>
    <property type="project" value="Alzheimers_University_of_Toronto"/>
</dbReference>
<dbReference type="GO" id="GO:0051092">
    <property type="term" value="P:positive regulation of NF-kappaB transcription factor activity"/>
    <property type="evidence" value="ECO:0000315"/>
    <property type="project" value="UniProtKB"/>
</dbReference>
<dbReference type="GO" id="GO:0045429">
    <property type="term" value="P:positive regulation of nitric oxide biosynthetic process"/>
    <property type="evidence" value="ECO:0000314"/>
    <property type="project" value="Alzheimers_University_of_Toronto"/>
</dbReference>
<dbReference type="GO" id="GO:0032436">
    <property type="term" value="P:positive regulation of proteasomal ubiquitin-dependent protein catabolic process"/>
    <property type="evidence" value="ECO:0000315"/>
    <property type="project" value="UniProtKB"/>
</dbReference>
<dbReference type="GO" id="GO:0031334">
    <property type="term" value="P:positive regulation of protein-containing complex assembly"/>
    <property type="evidence" value="ECO:0000314"/>
    <property type="project" value="ARUK-UCL"/>
</dbReference>
<dbReference type="GO" id="GO:0048260">
    <property type="term" value="P:positive regulation of receptor-mediated endocytosis"/>
    <property type="evidence" value="ECO:0000316"/>
    <property type="project" value="ARUK-UCL"/>
</dbReference>
<dbReference type="GO" id="GO:0032760">
    <property type="term" value="P:positive regulation of tumor necrosis factor production"/>
    <property type="evidence" value="ECO:0000314"/>
    <property type="project" value="Alzheimers_University_of_Toronto"/>
</dbReference>
<dbReference type="GO" id="GO:2000060">
    <property type="term" value="P:positive regulation of ubiquitin-dependent protein catabolic process"/>
    <property type="evidence" value="ECO:0000315"/>
    <property type="project" value="UniProtKB"/>
</dbReference>
<dbReference type="GO" id="GO:0017038">
    <property type="term" value="P:protein import"/>
    <property type="evidence" value="ECO:0000314"/>
    <property type="project" value="Alzheimers_University_of_Toronto"/>
</dbReference>
<dbReference type="GO" id="GO:0050821">
    <property type="term" value="P:protein stabilization"/>
    <property type="evidence" value="ECO:0000314"/>
    <property type="project" value="UniProtKB"/>
</dbReference>
<dbReference type="GO" id="GO:0061740">
    <property type="term" value="P:protein targeting to lysosome involved in chaperone-mediated autophagy"/>
    <property type="evidence" value="ECO:0000314"/>
    <property type="project" value="ARUK-UCL"/>
</dbReference>
<dbReference type="GO" id="GO:1900221">
    <property type="term" value="P:regulation of amyloid-beta clearance"/>
    <property type="evidence" value="ECO:0000314"/>
    <property type="project" value="Alzheimers_University_of_Toronto"/>
</dbReference>
<dbReference type="GO" id="GO:0042981">
    <property type="term" value="P:regulation of apoptotic process"/>
    <property type="evidence" value="ECO:0000318"/>
    <property type="project" value="GO_Central"/>
</dbReference>
<dbReference type="GO" id="GO:0042127">
    <property type="term" value="P:regulation of cell population proliferation"/>
    <property type="evidence" value="ECO:0000315"/>
    <property type="project" value="UniProtKB"/>
</dbReference>
<dbReference type="GO" id="GO:1902847">
    <property type="term" value="P:regulation of neuronal signal transduction"/>
    <property type="evidence" value="ECO:0000315"/>
    <property type="project" value="Alzheimers_University_of_Toronto"/>
</dbReference>
<dbReference type="GO" id="GO:0001836">
    <property type="term" value="P:release of cytochrome c from mitochondria"/>
    <property type="evidence" value="ECO:0000305"/>
    <property type="project" value="BHF-UCL"/>
</dbReference>
<dbReference type="GO" id="GO:0051788">
    <property type="term" value="P:response to misfolded protein"/>
    <property type="evidence" value="ECO:0000314"/>
    <property type="project" value="BHF-UCL"/>
</dbReference>
<dbReference type="GO" id="GO:0009615">
    <property type="term" value="P:response to virus"/>
    <property type="evidence" value="ECO:0000270"/>
    <property type="project" value="UniProtKB"/>
</dbReference>
<dbReference type="GO" id="GO:0043691">
    <property type="term" value="P:reverse cholesterol transport"/>
    <property type="evidence" value="ECO:0000304"/>
    <property type="project" value="BHF-UCL"/>
</dbReference>
<dbReference type="InterPro" id="IPR016016">
    <property type="entry name" value="Clusterin"/>
</dbReference>
<dbReference type="InterPro" id="IPR000753">
    <property type="entry name" value="Clusterin-like"/>
</dbReference>
<dbReference type="InterPro" id="IPR016015">
    <property type="entry name" value="Clusterin_C"/>
</dbReference>
<dbReference type="InterPro" id="IPR033986">
    <property type="entry name" value="Clusterin_CS"/>
</dbReference>
<dbReference type="InterPro" id="IPR016014">
    <property type="entry name" value="Clusterin_N"/>
</dbReference>
<dbReference type="PANTHER" id="PTHR10970">
    <property type="entry name" value="CLUSTERIN"/>
    <property type="match status" value="1"/>
</dbReference>
<dbReference type="PANTHER" id="PTHR10970:SF1">
    <property type="entry name" value="CLUSTERIN"/>
    <property type="match status" value="1"/>
</dbReference>
<dbReference type="Pfam" id="PF01093">
    <property type="entry name" value="Clusterin"/>
    <property type="match status" value="1"/>
</dbReference>
<dbReference type="PIRSF" id="PIRSF002368">
    <property type="entry name" value="Clusterin"/>
    <property type="match status" value="1"/>
</dbReference>
<dbReference type="SMART" id="SM00035">
    <property type="entry name" value="CLa"/>
    <property type="match status" value="1"/>
</dbReference>
<dbReference type="SMART" id="SM00030">
    <property type="entry name" value="CLb"/>
    <property type="match status" value="1"/>
</dbReference>
<dbReference type="PROSITE" id="PS00492">
    <property type="entry name" value="CLUSTERIN_1"/>
    <property type="match status" value="1"/>
</dbReference>
<dbReference type="PROSITE" id="PS00493">
    <property type="entry name" value="CLUSTERIN_2"/>
    <property type="match status" value="1"/>
</dbReference>
<evidence type="ECO:0000250" key="1"/>
<evidence type="ECO:0000250" key="2">
    <source>
        <dbReference type="UniProtKB" id="P05371"/>
    </source>
</evidence>
<evidence type="ECO:0000250" key="3">
    <source>
        <dbReference type="UniProtKB" id="Q06890"/>
    </source>
</evidence>
<evidence type="ECO:0000269" key="4">
    <source>
    </source>
</evidence>
<evidence type="ECO:0000269" key="5">
    <source>
    </source>
</evidence>
<evidence type="ECO:0000269" key="6">
    <source>
    </source>
</evidence>
<evidence type="ECO:0000269" key="7">
    <source>
    </source>
</evidence>
<evidence type="ECO:0000269" key="8">
    <source>
    </source>
</evidence>
<evidence type="ECO:0000269" key="9">
    <source>
    </source>
</evidence>
<evidence type="ECO:0000269" key="10">
    <source>
    </source>
</evidence>
<evidence type="ECO:0000269" key="11">
    <source>
    </source>
</evidence>
<evidence type="ECO:0000269" key="12">
    <source>
    </source>
</evidence>
<evidence type="ECO:0000269" key="13">
    <source>
    </source>
</evidence>
<evidence type="ECO:0000269" key="14">
    <source>
    </source>
</evidence>
<evidence type="ECO:0000269" key="15">
    <source>
    </source>
</evidence>
<evidence type="ECO:0000269" key="16">
    <source>
    </source>
</evidence>
<evidence type="ECO:0000269" key="17">
    <source>
    </source>
</evidence>
<evidence type="ECO:0000269" key="18">
    <source>
    </source>
</evidence>
<evidence type="ECO:0000269" key="19">
    <source>
    </source>
</evidence>
<evidence type="ECO:0000269" key="20">
    <source>
    </source>
</evidence>
<evidence type="ECO:0000269" key="21">
    <source>
    </source>
</evidence>
<evidence type="ECO:0000269" key="22">
    <source>
    </source>
</evidence>
<evidence type="ECO:0000269" key="23">
    <source>
    </source>
</evidence>
<evidence type="ECO:0000269" key="24">
    <source>
    </source>
</evidence>
<evidence type="ECO:0000269" key="25">
    <source>
    </source>
</evidence>
<evidence type="ECO:0000269" key="26">
    <source>
    </source>
</evidence>
<evidence type="ECO:0000269" key="27">
    <source>
    </source>
</evidence>
<evidence type="ECO:0000269" key="28">
    <source>
    </source>
</evidence>
<evidence type="ECO:0000269" key="29">
    <source>
    </source>
</evidence>
<evidence type="ECO:0000269" key="30">
    <source>
    </source>
</evidence>
<evidence type="ECO:0000269" key="31">
    <source>
    </source>
</evidence>
<evidence type="ECO:0000269" key="32">
    <source>
    </source>
</evidence>
<evidence type="ECO:0000269" key="33">
    <source>
    </source>
</evidence>
<evidence type="ECO:0000269" key="34">
    <source>
    </source>
</evidence>
<evidence type="ECO:0000269" key="35">
    <source>
    </source>
</evidence>
<evidence type="ECO:0000269" key="36">
    <source>
    </source>
</evidence>
<evidence type="ECO:0000269" key="37">
    <source>
    </source>
</evidence>
<evidence type="ECO:0000269" key="38">
    <source>
    </source>
</evidence>
<evidence type="ECO:0000269" key="39">
    <source>
    </source>
</evidence>
<evidence type="ECO:0000269" key="40">
    <source>
    </source>
</evidence>
<evidence type="ECO:0000269" key="41">
    <source>
    </source>
</evidence>
<evidence type="ECO:0000269" key="42">
    <source>
    </source>
</evidence>
<evidence type="ECO:0000269" key="43">
    <source>
    </source>
</evidence>
<evidence type="ECO:0000269" key="44">
    <source>
    </source>
</evidence>
<evidence type="ECO:0000269" key="45">
    <source>
    </source>
</evidence>
<evidence type="ECO:0000269" key="46">
    <source>
    </source>
</evidence>
<evidence type="ECO:0000269" key="47">
    <source>
    </source>
</evidence>
<evidence type="ECO:0000269" key="48">
    <source>
    </source>
</evidence>
<evidence type="ECO:0000269" key="49">
    <source>
    </source>
</evidence>
<evidence type="ECO:0000269" key="50">
    <source>
    </source>
</evidence>
<evidence type="ECO:0000269" key="51">
    <source>
    </source>
</evidence>
<evidence type="ECO:0000269" key="52">
    <source>
    </source>
</evidence>
<evidence type="ECO:0000269" key="53">
    <source>
    </source>
</evidence>
<evidence type="ECO:0000269" key="54">
    <source>
    </source>
</evidence>
<evidence type="ECO:0000269" key="55">
    <source>
    </source>
</evidence>
<evidence type="ECO:0000269" key="56">
    <source ref="7"/>
</evidence>
<evidence type="ECO:0000303" key="57">
    <source>
    </source>
</evidence>
<evidence type="ECO:0000303" key="58">
    <source>
    </source>
</evidence>
<evidence type="ECO:0000303" key="59">
    <source>
    </source>
</evidence>
<evidence type="ECO:0000303" key="60">
    <source>
    </source>
</evidence>
<evidence type="ECO:0000303" key="61">
    <source>
    </source>
</evidence>
<evidence type="ECO:0000303" key="62">
    <source>
    </source>
</evidence>
<evidence type="ECO:0000303" key="63">
    <source>
    </source>
</evidence>
<evidence type="ECO:0000303" key="64">
    <source>
    </source>
</evidence>
<evidence type="ECO:0000303" key="65">
    <source>
    </source>
</evidence>
<evidence type="ECO:0000303" key="66">
    <source>
    </source>
</evidence>
<evidence type="ECO:0000303" key="67">
    <source>
    </source>
</evidence>
<evidence type="ECO:0000303" key="68">
    <source ref="20"/>
</evidence>
<evidence type="ECO:0000303" key="69">
    <source ref="5"/>
</evidence>
<evidence type="ECO:0000305" key="70"/>
<evidence type="ECO:0000312" key="71">
    <source>
        <dbReference type="HGNC" id="HGNC:2095"/>
    </source>
</evidence>
<evidence type="ECO:0007744" key="72">
    <source>
    </source>
</evidence>
<evidence type="ECO:0007829" key="73">
    <source>
        <dbReference type="PDB" id="7ZET"/>
    </source>
</evidence>